<keyword id="KW-0002">3D-structure</keyword>
<keyword id="KW-0007">Acetylation</keyword>
<keyword id="KW-0072">Autophagy</keyword>
<keyword id="KW-1003">Cell membrane</keyword>
<keyword id="KW-0143">Chaperone</keyword>
<keyword id="KW-0186">Copper</keyword>
<keyword id="KW-0963">Cytoplasm</keyword>
<keyword id="KW-0903">Direct protein sequencing</keyword>
<keyword id="KW-0225">Disease variant</keyword>
<keyword id="KW-0227">DNA damage</keyword>
<keyword id="KW-0234">DNA repair</keyword>
<keyword id="KW-0256">Endoplasmic reticulum</keyword>
<keyword id="KW-0278">Fertilization</keyword>
<keyword id="KW-0378">Hydrolase</keyword>
<keyword id="KW-0395">Inflammatory response</keyword>
<keyword id="KW-1017">Isopeptide bond</keyword>
<keyword id="KW-0449">Lipoprotein</keyword>
<keyword id="KW-0472">Membrane</keyword>
<keyword id="KW-0496">Mitochondrion</keyword>
<keyword id="KW-0523">Neurodegeneration</keyword>
<keyword id="KW-0539">Nucleus</keyword>
<keyword id="KW-0558">Oxidation</keyword>
<keyword id="KW-0564">Palmitate</keyword>
<keyword id="KW-0907">Parkinson disease</keyword>
<keyword id="KW-0908">Parkinsonism</keyword>
<keyword id="KW-0597">Phosphoprotein</keyword>
<keyword id="KW-0645">Protease</keyword>
<keyword id="KW-1267">Proteomics identification</keyword>
<keyword id="KW-1185">Reference proteome</keyword>
<keyword id="KW-0694">RNA-binding</keyword>
<keyword id="KW-0346">Stress response</keyword>
<keyword id="KW-0043">Tumor suppressor</keyword>
<keyword id="KW-0832">Ubl conjugation</keyword>
<keyword id="KW-0865">Zymogen</keyword>
<reference key="1">
    <citation type="journal article" date="1997" name="Biochem. Biophys. Res. Commun.">
        <title>DJ-1, a novel oncogene which transforms mouse NIH3T3 cells in cooperation with ras.</title>
        <authorList>
            <person name="Nagakubo D."/>
            <person name="Taita T."/>
            <person name="Kitaura H."/>
            <person name="Ikeda M."/>
            <person name="Tamai K."/>
            <person name="Iguchi-Ariga S.M.M."/>
            <person name="Ariga H."/>
        </authorList>
    </citation>
    <scope>NUCLEOTIDE SEQUENCE [MRNA]</scope>
    <scope>FUNCTION</scope>
    <scope>SUBCELLULAR LOCATION</scope>
    <scope>TISSUE SPECIFICITY</scope>
    <source>
        <tissue>Cervix carcinoma</tissue>
    </source>
</reference>
<reference key="2">
    <citation type="submission" date="1997-08" db="EMBL/GenBank/DDBJ databases">
        <title>Homo sapiens RNA-binding protein regulatory subunit mRNA.</title>
        <authorList>
            <person name="Beaudoin R."/>
            <person name="Hod Y."/>
        </authorList>
    </citation>
    <scope>NUCLEOTIDE SEQUENCE [MRNA]</scope>
    <source>
        <tissue>Lung</tissue>
    </source>
</reference>
<reference key="3">
    <citation type="submission" date="2001-11" db="EMBL/GenBank/DDBJ databases">
        <title>Human DJ-1 cDNA from PC3 cells.</title>
        <authorList>
            <person name="Ariga H."/>
            <person name="Niki T."/>
        </authorList>
    </citation>
    <scope>NUCLEOTIDE SEQUENCE [MRNA]</scope>
</reference>
<reference key="4">
    <citation type="journal article" date="2004" name="Nat. Genet.">
        <title>Complete sequencing and characterization of 21,243 full-length human cDNAs.</title>
        <authorList>
            <person name="Ota T."/>
            <person name="Suzuki Y."/>
            <person name="Nishikawa T."/>
            <person name="Otsuki T."/>
            <person name="Sugiyama T."/>
            <person name="Irie R."/>
            <person name="Wakamatsu A."/>
            <person name="Hayashi K."/>
            <person name="Sato H."/>
            <person name="Nagai K."/>
            <person name="Kimura K."/>
            <person name="Makita H."/>
            <person name="Sekine M."/>
            <person name="Obayashi M."/>
            <person name="Nishi T."/>
            <person name="Shibahara T."/>
            <person name="Tanaka T."/>
            <person name="Ishii S."/>
            <person name="Yamamoto J."/>
            <person name="Saito K."/>
            <person name="Kawai Y."/>
            <person name="Isono Y."/>
            <person name="Nakamura Y."/>
            <person name="Nagahari K."/>
            <person name="Murakami K."/>
            <person name="Yasuda T."/>
            <person name="Iwayanagi T."/>
            <person name="Wagatsuma M."/>
            <person name="Shiratori A."/>
            <person name="Sudo H."/>
            <person name="Hosoiri T."/>
            <person name="Kaku Y."/>
            <person name="Kodaira H."/>
            <person name="Kondo H."/>
            <person name="Sugawara M."/>
            <person name="Takahashi M."/>
            <person name="Kanda K."/>
            <person name="Yokoi T."/>
            <person name="Furuya T."/>
            <person name="Kikkawa E."/>
            <person name="Omura Y."/>
            <person name="Abe K."/>
            <person name="Kamihara K."/>
            <person name="Katsuta N."/>
            <person name="Sato K."/>
            <person name="Tanikawa M."/>
            <person name="Yamazaki M."/>
            <person name="Ninomiya K."/>
            <person name="Ishibashi T."/>
            <person name="Yamashita H."/>
            <person name="Murakawa K."/>
            <person name="Fujimori K."/>
            <person name="Tanai H."/>
            <person name="Kimata M."/>
            <person name="Watanabe M."/>
            <person name="Hiraoka S."/>
            <person name="Chiba Y."/>
            <person name="Ishida S."/>
            <person name="Ono Y."/>
            <person name="Takiguchi S."/>
            <person name="Watanabe S."/>
            <person name="Yosida M."/>
            <person name="Hotuta T."/>
            <person name="Kusano J."/>
            <person name="Kanehori K."/>
            <person name="Takahashi-Fujii A."/>
            <person name="Hara H."/>
            <person name="Tanase T.-O."/>
            <person name="Nomura Y."/>
            <person name="Togiya S."/>
            <person name="Komai F."/>
            <person name="Hara R."/>
            <person name="Takeuchi K."/>
            <person name="Arita M."/>
            <person name="Imose N."/>
            <person name="Musashino K."/>
            <person name="Yuuki H."/>
            <person name="Oshima A."/>
            <person name="Sasaki N."/>
            <person name="Aotsuka S."/>
            <person name="Yoshikawa Y."/>
            <person name="Matsunawa H."/>
            <person name="Ichihara T."/>
            <person name="Shiohata N."/>
            <person name="Sano S."/>
            <person name="Moriya S."/>
            <person name="Momiyama H."/>
            <person name="Satoh N."/>
            <person name="Takami S."/>
            <person name="Terashima Y."/>
            <person name="Suzuki O."/>
            <person name="Nakagawa S."/>
            <person name="Senoh A."/>
            <person name="Mizoguchi H."/>
            <person name="Goto Y."/>
            <person name="Shimizu F."/>
            <person name="Wakebe H."/>
            <person name="Hishigaki H."/>
            <person name="Watanabe T."/>
            <person name="Sugiyama A."/>
            <person name="Takemoto M."/>
            <person name="Kawakami B."/>
            <person name="Yamazaki M."/>
            <person name="Watanabe K."/>
            <person name="Kumagai A."/>
            <person name="Itakura S."/>
            <person name="Fukuzumi Y."/>
            <person name="Fujimori Y."/>
            <person name="Komiyama M."/>
            <person name="Tashiro H."/>
            <person name="Tanigami A."/>
            <person name="Fujiwara T."/>
            <person name="Ono T."/>
            <person name="Yamada K."/>
            <person name="Fujii Y."/>
            <person name="Ozaki K."/>
            <person name="Hirao M."/>
            <person name="Ohmori Y."/>
            <person name="Kawabata A."/>
            <person name="Hikiji T."/>
            <person name="Kobatake N."/>
            <person name="Inagaki H."/>
            <person name="Ikema Y."/>
            <person name="Okamoto S."/>
            <person name="Okitani R."/>
            <person name="Kawakami T."/>
            <person name="Noguchi S."/>
            <person name="Itoh T."/>
            <person name="Shigeta K."/>
            <person name="Senba T."/>
            <person name="Matsumura K."/>
            <person name="Nakajima Y."/>
            <person name="Mizuno T."/>
            <person name="Morinaga M."/>
            <person name="Sasaki M."/>
            <person name="Togashi T."/>
            <person name="Oyama M."/>
            <person name="Hata H."/>
            <person name="Watanabe M."/>
            <person name="Komatsu T."/>
            <person name="Mizushima-Sugano J."/>
            <person name="Satoh T."/>
            <person name="Shirai Y."/>
            <person name="Takahashi Y."/>
            <person name="Nakagawa K."/>
            <person name="Okumura K."/>
            <person name="Nagase T."/>
            <person name="Nomura N."/>
            <person name="Kikuchi H."/>
            <person name="Masuho Y."/>
            <person name="Yamashita R."/>
            <person name="Nakai K."/>
            <person name="Yada T."/>
            <person name="Nakamura Y."/>
            <person name="Ohara O."/>
            <person name="Isogai T."/>
            <person name="Sugano S."/>
        </authorList>
    </citation>
    <scope>NUCLEOTIDE SEQUENCE [LARGE SCALE MRNA]</scope>
    <source>
        <tissue>Thalamus</tissue>
    </source>
</reference>
<reference key="5">
    <citation type="journal article" date="2006" name="Nature">
        <title>The DNA sequence and biological annotation of human chromosome 1.</title>
        <authorList>
            <person name="Gregory S.G."/>
            <person name="Barlow K.F."/>
            <person name="McLay K.E."/>
            <person name="Kaul R."/>
            <person name="Swarbreck D."/>
            <person name="Dunham A."/>
            <person name="Scott C.E."/>
            <person name="Howe K.L."/>
            <person name="Woodfine K."/>
            <person name="Spencer C.C.A."/>
            <person name="Jones M.C."/>
            <person name="Gillson C."/>
            <person name="Searle S."/>
            <person name="Zhou Y."/>
            <person name="Kokocinski F."/>
            <person name="McDonald L."/>
            <person name="Evans R."/>
            <person name="Phillips K."/>
            <person name="Atkinson A."/>
            <person name="Cooper R."/>
            <person name="Jones C."/>
            <person name="Hall R.E."/>
            <person name="Andrews T.D."/>
            <person name="Lloyd C."/>
            <person name="Ainscough R."/>
            <person name="Almeida J.P."/>
            <person name="Ambrose K.D."/>
            <person name="Anderson F."/>
            <person name="Andrew R.W."/>
            <person name="Ashwell R.I.S."/>
            <person name="Aubin K."/>
            <person name="Babbage A.K."/>
            <person name="Bagguley C.L."/>
            <person name="Bailey J."/>
            <person name="Beasley H."/>
            <person name="Bethel G."/>
            <person name="Bird C.P."/>
            <person name="Bray-Allen S."/>
            <person name="Brown J.Y."/>
            <person name="Brown A.J."/>
            <person name="Buckley D."/>
            <person name="Burton J."/>
            <person name="Bye J."/>
            <person name="Carder C."/>
            <person name="Chapman J.C."/>
            <person name="Clark S.Y."/>
            <person name="Clarke G."/>
            <person name="Clee C."/>
            <person name="Cobley V."/>
            <person name="Collier R.E."/>
            <person name="Corby N."/>
            <person name="Coville G.J."/>
            <person name="Davies J."/>
            <person name="Deadman R."/>
            <person name="Dunn M."/>
            <person name="Earthrowl M."/>
            <person name="Ellington A.G."/>
            <person name="Errington H."/>
            <person name="Frankish A."/>
            <person name="Frankland J."/>
            <person name="French L."/>
            <person name="Garner P."/>
            <person name="Garnett J."/>
            <person name="Gay L."/>
            <person name="Ghori M.R.J."/>
            <person name="Gibson R."/>
            <person name="Gilby L.M."/>
            <person name="Gillett W."/>
            <person name="Glithero R.J."/>
            <person name="Grafham D.V."/>
            <person name="Griffiths C."/>
            <person name="Griffiths-Jones S."/>
            <person name="Grocock R."/>
            <person name="Hammond S."/>
            <person name="Harrison E.S.I."/>
            <person name="Hart E."/>
            <person name="Haugen E."/>
            <person name="Heath P.D."/>
            <person name="Holmes S."/>
            <person name="Holt K."/>
            <person name="Howden P.J."/>
            <person name="Hunt A.R."/>
            <person name="Hunt S.E."/>
            <person name="Hunter G."/>
            <person name="Isherwood J."/>
            <person name="James R."/>
            <person name="Johnson C."/>
            <person name="Johnson D."/>
            <person name="Joy A."/>
            <person name="Kay M."/>
            <person name="Kershaw J.K."/>
            <person name="Kibukawa M."/>
            <person name="Kimberley A.M."/>
            <person name="King A."/>
            <person name="Knights A.J."/>
            <person name="Lad H."/>
            <person name="Laird G."/>
            <person name="Lawlor S."/>
            <person name="Leongamornlert D.A."/>
            <person name="Lloyd D.M."/>
            <person name="Loveland J."/>
            <person name="Lovell J."/>
            <person name="Lush M.J."/>
            <person name="Lyne R."/>
            <person name="Martin S."/>
            <person name="Mashreghi-Mohammadi M."/>
            <person name="Matthews L."/>
            <person name="Matthews N.S.W."/>
            <person name="McLaren S."/>
            <person name="Milne S."/>
            <person name="Mistry S."/>
            <person name="Moore M.J.F."/>
            <person name="Nickerson T."/>
            <person name="O'Dell C.N."/>
            <person name="Oliver K."/>
            <person name="Palmeiri A."/>
            <person name="Palmer S.A."/>
            <person name="Parker A."/>
            <person name="Patel D."/>
            <person name="Pearce A.V."/>
            <person name="Peck A.I."/>
            <person name="Pelan S."/>
            <person name="Phelps K."/>
            <person name="Phillimore B.J."/>
            <person name="Plumb R."/>
            <person name="Rajan J."/>
            <person name="Raymond C."/>
            <person name="Rouse G."/>
            <person name="Saenphimmachak C."/>
            <person name="Sehra H.K."/>
            <person name="Sheridan E."/>
            <person name="Shownkeen R."/>
            <person name="Sims S."/>
            <person name="Skuce C.D."/>
            <person name="Smith M."/>
            <person name="Steward C."/>
            <person name="Subramanian S."/>
            <person name="Sycamore N."/>
            <person name="Tracey A."/>
            <person name="Tromans A."/>
            <person name="Van Helmond Z."/>
            <person name="Wall M."/>
            <person name="Wallis J.M."/>
            <person name="White S."/>
            <person name="Whitehead S.L."/>
            <person name="Wilkinson J.E."/>
            <person name="Willey D.L."/>
            <person name="Williams H."/>
            <person name="Wilming L."/>
            <person name="Wray P.W."/>
            <person name="Wu Z."/>
            <person name="Coulson A."/>
            <person name="Vaudin M."/>
            <person name="Sulston J.E."/>
            <person name="Durbin R.M."/>
            <person name="Hubbard T."/>
            <person name="Wooster R."/>
            <person name="Dunham I."/>
            <person name="Carter N.P."/>
            <person name="McVean G."/>
            <person name="Ross M.T."/>
            <person name="Harrow J."/>
            <person name="Olson M.V."/>
            <person name="Beck S."/>
            <person name="Rogers J."/>
            <person name="Bentley D.R."/>
        </authorList>
    </citation>
    <scope>NUCLEOTIDE SEQUENCE [LARGE SCALE GENOMIC DNA]</scope>
</reference>
<reference key="6">
    <citation type="submission" date="2005-07" db="EMBL/GenBank/DDBJ databases">
        <authorList>
            <person name="Mural R.J."/>
            <person name="Istrail S."/>
            <person name="Sutton G.G."/>
            <person name="Florea L."/>
            <person name="Halpern A.L."/>
            <person name="Mobarry C.M."/>
            <person name="Lippert R."/>
            <person name="Walenz B."/>
            <person name="Shatkay H."/>
            <person name="Dew I."/>
            <person name="Miller J.R."/>
            <person name="Flanigan M.J."/>
            <person name="Edwards N.J."/>
            <person name="Bolanos R."/>
            <person name="Fasulo D."/>
            <person name="Halldorsson B.V."/>
            <person name="Hannenhalli S."/>
            <person name="Turner R."/>
            <person name="Yooseph S."/>
            <person name="Lu F."/>
            <person name="Nusskern D.R."/>
            <person name="Shue B.C."/>
            <person name="Zheng X.H."/>
            <person name="Zhong F."/>
            <person name="Delcher A.L."/>
            <person name="Huson D.H."/>
            <person name="Kravitz S.A."/>
            <person name="Mouchard L."/>
            <person name="Reinert K."/>
            <person name="Remington K.A."/>
            <person name="Clark A.G."/>
            <person name="Waterman M.S."/>
            <person name="Eichler E.E."/>
            <person name="Adams M.D."/>
            <person name="Hunkapiller M.W."/>
            <person name="Myers E.W."/>
            <person name="Venter J.C."/>
        </authorList>
    </citation>
    <scope>NUCLEOTIDE SEQUENCE [LARGE SCALE GENOMIC DNA]</scope>
</reference>
<reference key="7">
    <citation type="journal article" date="2004" name="Genome Res.">
        <title>The status, quality, and expansion of the NIH full-length cDNA project: the Mammalian Gene Collection (MGC).</title>
        <authorList>
            <consortium name="The MGC Project Team"/>
        </authorList>
    </citation>
    <scope>NUCLEOTIDE SEQUENCE [LARGE SCALE MRNA]</scope>
    <source>
        <tissue>Cervix</tissue>
    </source>
</reference>
<reference key="8">
    <citation type="journal article" date="2001" name="Gene">
        <title>Molecular cloning of human and mouse DJ-1 genes and identification of Sp1-dependent activation of the human DJ-1 promoter.</title>
        <authorList>
            <person name="Taira T."/>
            <person name="Takahashi K."/>
            <person name="Kitagawa R."/>
            <person name="Iguchi-Ariga S.M.M."/>
            <person name="Ariga H."/>
        </authorList>
    </citation>
    <scope>NUCLEOTIDE SEQUENCE [GENOMIC DNA] OF 1-6</scope>
    <source>
        <tissue>Kidney</tissue>
    </source>
</reference>
<reference key="9">
    <citation type="submission" date="2008-12" db="UniProtKB">
        <authorList>
            <person name="Lubec G."/>
            <person name="Afjehi-Sadat L."/>
            <person name="Chen W.-Q."/>
            <person name="Sun Y."/>
        </authorList>
    </citation>
    <scope>PROTEIN SEQUENCE OF 6-27; 33-89; 99-122 AND 149-175</scope>
    <scope>IDENTIFICATION BY MASS SPECTROMETRY</scope>
    <source>
        <tissue>Brain</tissue>
        <tissue>Cajal-Retzius cell</tissue>
        <tissue>Fetal brain cortex</tissue>
    </source>
</reference>
<reference key="10">
    <citation type="submission" date="2004-06" db="EMBL/GenBank/DDBJ databases">
        <title>DJ-1 gene G150S mutation.</title>
        <authorList>
            <person name="Zou H.Q."/>
            <person name="Chan P."/>
        </authorList>
    </citation>
    <scope>NUCLEOTIDE SEQUENCE [GENOMIC DNA] OF 138-189</scope>
    <scope>VARIANT SER-150</scope>
</reference>
<reference key="11">
    <citation type="journal article" date="2001" name="J. Biol. Chem.">
        <title>DJ-1 positively regulates the androgen receptor by impairing the binding of PIASx alpha to the receptor.</title>
        <authorList>
            <person name="Takahashi K."/>
            <person name="Taira T."/>
            <person name="Niki T."/>
            <person name="Seino C."/>
            <person name="Iguchi-Ariga S.M.M."/>
            <person name="Ariga H."/>
        </authorList>
    </citation>
    <scope>INTERACTION WITH PIAS2</scope>
    <scope>SUBCELLULAR LOCATION</scope>
    <scope>FUNCTION</scope>
</reference>
<reference key="12">
    <citation type="journal article" date="2003" name="J. Biol. Chem.">
        <title>L166P mutant DJ-1, causative for recessive Parkinson's disease, is degraded through the ubiquitin-proteasome system.</title>
        <authorList>
            <person name="Miller D.W."/>
            <person name="Ahmad R."/>
            <person name="Hague S."/>
            <person name="Baptista M.J."/>
            <person name="Canet-Aviles R."/>
            <person name="McLendon C."/>
            <person name="Carter D.M."/>
            <person name="Zhu P.-P."/>
            <person name="Stadler J."/>
            <person name="Chandran J."/>
            <person name="Klinefelter G.R."/>
            <person name="Blackstone C."/>
            <person name="Cookson M.R."/>
        </authorList>
    </citation>
    <scope>DEGRADATION BY THE PROTEASOME</scope>
    <scope>SUBCELLULAR LOCATION</scope>
    <scope>INTERACTION WITH PIAS2</scope>
    <scope>HOMODIMERIZATION</scope>
    <scope>MUTAGENESIS OF LYS-130</scope>
    <scope>CHARACTERIZATION OF VARIANT PARK7 PRO-166</scope>
</reference>
<reference key="13">
    <citation type="journal article" date="2003" name="J. Neurochem.">
        <title>A missense mutation (L166P) in DJ-1, linked to familial Parkinson's disease, confers reduced protein stability and impairs homo-oligomerization.</title>
        <authorList>
            <person name="Moore D.J."/>
            <person name="Zhang L."/>
            <person name="Dawson T.M."/>
            <person name="Dawson V.L."/>
        </authorList>
    </citation>
    <scope>DEGRADATION BY THE PROTEASOME</scope>
    <scope>CHARACTERIZATION OF VARIANTS PARK7 ILE-26 AND PRO-166</scope>
</reference>
<reference key="14">
    <citation type="journal article" date="2003" name="Mol. Cancer Res.">
        <title>DJBP: a novel DJ-1-binding protein, negatively regulates the androgen receptor by recruiting histone deacetylase complex, and DJ-1 antagonizes this inhibition by abrogation of this complex.</title>
        <authorList>
            <person name="Niki T."/>
            <person name="Takahashi-Niki K."/>
            <person name="Taira T."/>
            <person name="Iguchi-Ariga S.M.M."/>
            <person name="Ariga H."/>
        </authorList>
    </citation>
    <scope>FUNCTION</scope>
    <scope>INTERACTION WITH EFCAB6</scope>
    <scope>COMPONENT OF A COMPLEX COMPOSED OF AR; EFCAB6 AND PARK7</scope>
</reference>
<reference key="15">
    <citation type="journal article" date="2003" name="Mol. Reprod. Dev.">
        <title>Immunocytochemical localization of DJ-1 in human male reproductive tissue.</title>
        <authorList>
            <person name="Yoshida K."/>
            <person name="Sato Y."/>
            <person name="Yoshiike M."/>
            <person name="Nozawa S."/>
            <person name="Ariga H."/>
            <person name="Iwamoto T."/>
        </authorList>
    </citation>
    <scope>TISSUE SPECIFICITY</scope>
    <scope>SUBCELLULAR LOCATION</scope>
</reference>
<reference key="16">
    <citation type="journal article" date="2004" name="Ann. Neurol.">
        <title>DJ-1 colocalizes with tau inclusions: a link between parkinsonism and dementia.</title>
        <authorList>
            <person name="Rizzu P."/>
            <person name="Hinkle D.A."/>
            <person name="Zhukareva V."/>
            <person name="Bonifati V."/>
            <person name="Severijnen L.-A."/>
            <person name="Martinez D."/>
            <person name="Ravid R."/>
            <person name="Kamphorst W."/>
            <person name="Eberwine J.H."/>
            <person name="Lee V.M.-Y."/>
            <person name="Trojanowski J.Q."/>
            <person name="Heutink P."/>
        </authorList>
    </citation>
    <scope>TISSUE SPECIFICITY</scope>
    <scope>SUBCELLULAR LOCATION</scope>
</reference>
<reference key="17">
    <citation type="journal article" date="2004" name="Brain">
        <title>The expression of DJ-1 (PARK7) in normal human CNS and idiopathic Parkinson's disease.</title>
        <authorList>
            <person name="Bandopadhyay R."/>
            <person name="Kingsbury A.E."/>
            <person name="Cookson M.R."/>
            <person name="Reid A.R."/>
            <person name="Evans I.M."/>
            <person name="Hope A.D."/>
            <person name="Pittman A.M."/>
            <person name="Lashley T."/>
            <person name="Canet-Aviles R."/>
            <person name="Miller D.W."/>
            <person name="McLendon C."/>
            <person name="Strand C."/>
            <person name="Leonard A.J."/>
            <person name="Abou-Sleiman P.M."/>
            <person name="Healy D.G."/>
            <person name="Ariga H."/>
            <person name="Wood N.W."/>
            <person name="de Silva R."/>
            <person name="Revesz T."/>
            <person name="Hardy J.A."/>
            <person name="Lees A.J."/>
        </authorList>
    </citation>
    <scope>TISSUE SPECIFICITY</scope>
</reference>
<reference key="18">
    <citation type="journal article" date="2004" name="EMBO Rep.">
        <title>DJ-1 has a role in antioxidative stress to prevent cell death.</title>
        <authorList>
            <person name="Taira T."/>
            <person name="Saito Y."/>
            <person name="Niki T."/>
            <person name="Iguchi-Ariga S.M."/>
            <person name="Takahashi K."/>
            <person name="Ariga H."/>
        </authorList>
    </citation>
    <scope>FUNCTION</scope>
    <scope>INDUCTION</scope>
    <scope>MUTAGENESIS OF VAL-51 AND CYS-53</scope>
</reference>
<reference key="19">
    <citation type="journal article" date="2004" name="PLoS Biol.">
        <title>DJ-1 is a redox-dependent molecular chaperone that inhibits alpha-synuclein aggregate formation.</title>
        <authorList>
            <person name="Shendelman S."/>
            <person name="Jonason A."/>
            <person name="Martinat C."/>
            <person name="Leete T."/>
            <person name="Abeliovich A."/>
        </authorList>
    </citation>
    <scope>FUNCTION</scope>
    <scope>MUTAGENESIS OF CYS-46; CYS-53 AND CYS-106</scope>
</reference>
<reference key="20">
    <citation type="journal article" date="2005" name="Nat. Biotechnol.">
        <title>Immunoaffinity profiling of tyrosine phosphorylation in cancer cells.</title>
        <authorList>
            <person name="Rush J."/>
            <person name="Moritz A."/>
            <person name="Lee K.A."/>
            <person name="Guo A."/>
            <person name="Goss V.L."/>
            <person name="Spek E.J."/>
            <person name="Zhang H."/>
            <person name="Zha X.-M."/>
            <person name="Polakiewicz R.D."/>
            <person name="Comb M.J."/>
        </authorList>
    </citation>
    <scope>PHOSPHORYLATION [LARGE SCALE ANALYSIS] AT TYR-67</scope>
    <scope>IDENTIFICATION BY MASS SPECTROMETRY [LARGE SCALE ANALYSIS]</scope>
</reference>
<reference key="21">
    <citation type="journal article" date="2006" name="Cell Death Differ.">
        <title>Proper SUMO-1 conjugation is essential to DJ-1 to exert its full activities.</title>
        <authorList>
            <person name="Shinbo Y."/>
            <person name="Niki T."/>
            <person name="Taira T."/>
            <person name="Ooe H."/>
            <person name="Takahashi-Niki K."/>
            <person name="Maita C."/>
            <person name="Seino C."/>
            <person name="Iguchi-Ariga S.M.M."/>
            <person name="Ariga H."/>
        </authorList>
    </citation>
    <scope>SUMOYLATION AT LYS-130</scope>
    <scope>OXIDATION</scope>
    <scope>SUBCELLULAR LOCATION</scope>
    <scope>INDUCTION</scope>
    <scope>FUNCTION</scope>
</reference>
<reference key="22">
    <citation type="journal article" date="2006" name="Free Radic. Res.">
        <title>DJ-1 interacts with HIPK1 and affects H2O2-induced cell death.</title>
        <authorList>
            <person name="Sekito A."/>
            <person name="Koide-Yoshida S."/>
            <person name="Niki T."/>
            <person name="Taira T."/>
            <person name="Iguchi-Ariga S.M.M."/>
            <person name="Ariga H."/>
        </authorList>
    </citation>
    <scope>FUNCTION</scope>
    <scope>INTERACTION WITH HIPK1</scope>
    <scope>SUBCELLULAR LOCATION</scope>
    <scope>MUTAGENESIS OF CYS-106</scope>
</reference>
<reference key="23">
    <citation type="journal article" date="2006" name="Proc. Natl. Acad. Sci. U.S.A.">
        <title>DJ-1, a cancer- and Parkinson's disease-associated protein, stabilizes the antioxidant transcriptional master regulator Nrf2.</title>
        <authorList>
            <person name="Clements C.M."/>
            <person name="McNally R.S."/>
            <person name="Conti B.J."/>
            <person name="Mak T.W."/>
            <person name="Ting J.P."/>
        </authorList>
    </citation>
    <scope>FUNCTION</scope>
</reference>
<reference key="24">
    <citation type="journal article" date="2008" name="Proc. Natl. Acad. Sci. U.S.A.">
        <title>RNA binding activity of the recessive parkinsonism protein DJ-1 supports involvement in multiple cellular pathways.</title>
        <authorList>
            <person name="van der Brug M.P."/>
            <person name="Blackinton J."/>
            <person name="Chandran J."/>
            <person name="Hao L.Y."/>
            <person name="Lal A."/>
            <person name="Mazan-Mamczarz K."/>
            <person name="Martindale J."/>
            <person name="Xie C."/>
            <person name="Ahmad R."/>
            <person name="Thomas K.J."/>
            <person name="Beilina A."/>
            <person name="Gibbs J.R."/>
            <person name="Ding J."/>
            <person name="Myers A.J."/>
            <person name="Zhan M."/>
            <person name="Cai H."/>
            <person name="Bonini N.M."/>
            <person name="Gorospe M."/>
            <person name="Cookson M.R."/>
        </authorList>
    </citation>
    <scope>FUNCTION</scope>
</reference>
<reference key="25">
    <citation type="journal article" date="2009" name="J. Clin. Invest.">
        <title>Parkin, PINK1, and DJ-1 form a ubiquitin E3 ligase complex promoting unfolded protein degradation.</title>
        <authorList>
            <person name="Xiong H."/>
            <person name="Wang D."/>
            <person name="Chen L."/>
            <person name="Choo Y.S."/>
            <person name="Ma H."/>
            <person name="Tang C."/>
            <person name="Xia K."/>
            <person name="Jiang W."/>
            <person name="Ronai Z."/>
            <person name="Zhuang X."/>
            <person name="Zhang Z."/>
        </authorList>
    </citation>
    <scope>FUNCTION</scope>
    <scope>COMPONENT OF A COMPLEX COMPOSED OF PRKN; PARK7 AND PINK1</scope>
    <scope>SUBCELLULAR LOCATION</scope>
    <scope>CHARACTERIZATION OF VARIANT PARK7 PRO-166</scope>
</reference>
<reference key="26">
    <citation type="journal article" date="2009" name="J. Neurosci. Res.">
        <title>Mitochondrial localization of DJ-1 leads to enhanced neuroprotection.</title>
        <authorList>
            <person name="Junn E."/>
            <person name="Jang W.H."/>
            <person name="Zhao X."/>
            <person name="Jeong B.S."/>
            <person name="Mouradian M.M."/>
        </authorList>
    </citation>
    <scope>FUNCTION</scope>
    <scope>SUBCELLULAR LOCATION</scope>
    <scope>MUTAGENESIS OF CYS-46; CYS-53 AND CYS-106</scope>
</reference>
<reference key="27">
    <citation type="journal article" date="2010" name="Hum. Mol. Genet.">
        <title>Parkinson disease protein DJ-1 converts from a zymogen to a protease by carboxyl-terminal cleavage.</title>
        <authorList>
            <person name="Chen J."/>
            <person name="Li L."/>
            <person name="Chin L.S."/>
        </authorList>
    </citation>
    <scope>FUNCTION</scope>
    <scope>BIOPHYSICOCHEMICAL PROPERTIES</scope>
    <scope>ACTIVE SITES</scope>
    <scope>MUTAGENESIS OF CYS-106 AND HIS-126</scope>
</reference>
<reference key="28">
    <citation type="journal article" date="2011" name="BMC Syst. Biol.">
        <title>Initial characterization of the human central proteome.</title>
        <authorList>
            <person name="Burkard T.R."/>
            <person name="Planyavsky M."/>
            <person name="Kaupe I."/>
            <person name="Breitwieser F.P."/>
            <person name="Buerckstuemmer T."/>
            <person name="Bennett K.L."/>
            <person name="Superti-Furga G."/>
            <person name="Colinge J."/>
        </authorList>
    </citation>
    <scope>IDENTIFICATION BY MASS SPECTROMETRY [LARGE SCALE ANALYSIS]</scope>
</reference>
<reference key="29">
    <citation type="journal article" date="2011" name="J. Biol. Chem.">
        <title>DJ-1 enhances cell survival through the binding of cezanne, a negative regulator of NF-{kappa}B.</title>
        <authorList>
            <person name="McNally R.S."/>
            <person name="Davis B.K."/>
            <person name="Clements C.M."/>
            <person name="Accavitti-Loper M.A."/>
            <person name="Mak T.W."/>
            <person name="Ting J.P."/>
        </authorList>
    </citation>
    <scope>FUNCTION</scope>
    <scope>INTERACTION WITH BBS1; CLCF1; MTERF AND OTUD7B</scope>
    <scope>MUTAGENESIS OF CYS-106</scope>
</reference>
<reference key="30">
    <citation type="journal article" date="2012" name="Hum. Mol. Genet.">
        <title>Human DJ-1 and its homologs are novel glyoxalases.</title>
        <authorList>
            <person name="Lee J.Y."/>
            <person name="Song J."/>
            <person name="Kwon K."/>
            <person name="Jang S."/>
            <person name="Kim C."/>
            <person name="Baek K."/>
            <person name="Kim J."/>
            <person name="Park C."/>
        </authorList>
    </citation>
    <scope>FUNCTION</scope>
    <scope>CAUTION</scope>
    <scope>MUTAGENESIS OF GLU-18; CYS-106 AND HIS-126</scope>
    <scope>CHARACTERIZATION OF VARIANT PARK7 PRO-166</scope>
</reference>
<reference key="31">
    <citation type="journal article" date="2012" name="J. Mol. Cell Biol.">
        <title>Age- and diet-dependent requirement of DJ-1 for glucose homeostasis in mice with implications for human type 2 diabetes.</title>
        <authorList>
            <person name="Jain D."/>
            <person name="Jain R."/>
            <person name="Eberhard D."/>
            <person name="Eglinger J."/>
            <person name="Bugliani M."/>
            <person name="Piemonti L."/>
            <person name="Marchetti P."/>
            <person name="Lammert E."/>
        </authorList>
    </citation>
    <scope>FUNCTION</scope>
    <scope>DEVELOPMENTAL STAGE</scope>
    <scope>INDUCTION BY HYPERGLYCEMIC CONDITIONS</scope>
    <scope>TISSUE SPECIFICITY</scope>
    <scope>INVOLVEMENT IN DISEASE</scope>
</reference>
<reference key="32">
    <citation type="journal article" date="2013" name="Hum. Mol. Genet.">
        <title>DJ-1 associates with lipid rafts by palmitoylation and regulates lipid rafts-dependent endocytosis in astrocytes.</title>
        <authorList>
            <person name="Kim K.S."/>
            <person name="Kim J.S."/>
            <person name="Park J.Y."/>
            <person name="Suh Y.H."/>
            <person name="Jou I."/>
            <person name="Joe E.H."/>
            <person name="Park S.M."/>
        </authorList>
    </citation>
    <scope>FUNCTION</scope>
    <scope>PALMITOYLATION AT CYS-46; CYS-53 AND CYS-106</scope>
    <scope>SUBCELLULAR LOCATION</scope>
    <scope>MUTAGENESIS OF CYS-46 AND CYS-106</scope>
    <scope>CHARACTERIZATION OF VARIANT PARK7 PRO-166</scope>
</reference>
<reference key="33">
    <citation type="journal article" date="2013" name="J. Biol. Chem.">
        <title>Parkinson disease protein DJ-1 binds metals and protects against metal-induced cytotoxicity.</title>
        <authorList>
            <person name="Bjorkblom B."/>
            <person name="Adilbayeva A."/>
            <person name="Maple-Grodem J."/>
            <person name="Piston D."/>
            <person name="Okvist M."/>
            <person name="Xu X.M."/>
            <person name="Brede C."/>
            <person name="Larsen J.P."/>
            <person name="Moller S.G."/>
        </authorList>
    </citation>
    <scope>FUNCTION</scope>
    <scope>COPPER-BINDING</scope>
    <scope>CHARACTERIZATION OF VARIANTS PARK7 THR-104 AND ALA-149</scope>
    <scope>MUTAGENESIS OF CYS-106</scope>
</reference>
<reference key="34">
    <citation type="journal article" date="2014" name="J. Proteomics">
        <title>An enzyme assisted RP-RPLC approach for in-depth analysis of human liver phosphoproteome.</title>
        <authorList>
            <person name="Bian Y."/>
            <person name="Song C."/>
            <person name="Cheng K."/>
            <person name="Dong M."/>
            <person name="Wang F."/>
            <person name="Huang J."/>
            <person name="Sun D."/>
            <person name="Wang L."/>
            <person name="Ye M."/>
            <person name="Zou H."/>
        </authorList>
    </citation>
    <scope>IDENTIFICATION BY MASS SPECTROMETRY [LARGE SCALE ANALYSIS]</scope>
    <source>
        <tissue>Liver</tissue>
    </source>
</reference>
<reference key="35">
    <citation type="journal article" date="2015" name="J. Biol. Chem.">
        <title>Parkinsonism-associated protein DJ-1/Park7 is a major protein deglycase that repairs methylglyoxal- and glyoxal-glycated cysteine, arginine and lysine residues.</title>
        <authorList>
            <person name="Richarme G."/>
            <person name="Mihoub M."/>
            <person name="Dairou J."/>
            <person name="Bui L.C."/>
            <person name="Leger T."/>
            <person name="Lamouri A."/>
        </authorList>
    </citation>
    <scope>FUNCTION</scope>
    <scope>CATALYTIC ACTIVITY</scope>
    <scope>BIOPHYSICOCHEMICAL PROPERTIES</scope>
    <scope>CAUTION</scope>
    <scope>MUTAGENESIS OF CYS-46; CYS-53 AND CYS-106</scope>
    <scope>COFACTOR</scope>
</reference>
<reference key="36">
    <citation type="journal article" date="2015" name="Proteomics">
        <title>N-terminome analysis of the human mitochondrial proteome.</title>
        <authorList>
            <person name="Vaca Jacome A.S."/>
            <person name="Rabilloud T."/>
            <person name="Schaeffer-Reiss C."/>
            <person name="Rompais M."/>
            <person name="Ayoub D."/>
            <person name="Lane L."/>
            <person name="Bairoch A."/>
            <person name="Van Dorsselaer A."/>
            <person name="Carapito C."/>
        </authorList>
    </citation>
    <scope>ACETYLATION [LARGE SCALE ANALYSIS] AT ALA-2</scope>
    <scope>CLEAVAGE OF INITIATOR METHIONINE [LARGE SCALE ANALYSIS]</scope>
    <scope>IDENTIFICATION BY MASS SPECTROMETRY [LARGE SCALE ANALYSIS]</scope>
</reference>
<reference key="37">
    <citation type="journal article" date="2017" name="J. Biol. Chem.">
        <title>Evidence against a role for the Parkinsonism-associated protein DJ-1 in methylglyoxal detoxification.</title>
        <authorList>
            <person name="Pfaff D.H."/>
            <person name="Fleming T."/>
            <person name="Nawroth P."/>
            <person name="Teleman A.A."/>
        </authorList>
    </citation>
    <scope>CAUTION</scope>
</reference>
<reference key="38">
    <citation type="journal article" date="2017" name="Biochem. Biophys. Res. Commun.">
        <title>Parkinsonism-associated protein DJ-1 is a bona fide deglycase.</title>
        <authorList>
            <person name="Richarme G."/>
            <person name="Dairou J."/>
        </authorList>
    </citation>
    <scope>FUNCTION</scope>
    <scope>CAUTION</scope>
</reference>
<reference key="39">
    <citation type="journal article" date="2016" name="Biochem. Biophys. Res. Commun.">
        <title>The Parkinsonism-associated protein DJ-1/Park7 prevents glycation damage in human keratinocyte.</title>
        <authorList>
            <person name="Advedissian T."/>
            <person name="Deshayes F."/>
            <person name="Poirier F."/>
            <person name="Viguier M."/>
            <person name="Richarme G."/>
        </authorList>
    </citation>
    <scope>FUNCTION</scope>
    <scope>INDUCTION BY SULFORAPHANE</scope>
</reference>
<reference key="40">
    <citation type="journal article" date="2017" name="Science">
        <title>Guanine glycation repair by DJ-1/Park7 and its bacterial homologs.</title>
        <authorList>
            <person name="Richarme G."/>
            <person name="Liu C."/>
            <person name="Mihoub M."/>
            <person name="Abdallah J."/>
            <person name="Leger T."/>
            <person name="Joly N."/>
            <person name="Liebart J.C."/>
            <person name="Jurkunas U.V."/>
            <person name="Nadal M."/>
            <person name="Bouloc P."/>
            <person name="Dairou J."/>
            <person name="Lamouri A."/>
        </authorList>
    </citation>
    <scope>FUNCTION</scope>
    <scope>CATALYTIC ACTIVITY</scope>
    <scope>MUTAGENESIS OF CYS-106</scope>
    <scope>SUBCELLULAR LOCATION</scope>
    <scope>CAUTION</scope>
</reference>
<reference key="41">
    <citation type="journal article" date="2017" name="Sci. Rep.">
        <title>Parkinson's disease-related DJ-1 functions in thiol quality control against aldehyde attack in vitro.</title>
        <authorList>
            <person name="Matsuda N."/>
            <person name="Kimura M."/>
            <person name="Queliconi B.B."/>
            <person name="Kojima W."/>
            <person name="Mishima M."/>
            <person name="Takagi K."/>
            <person name="Koyano F."/>
            <person name="Yamano K."/>
            <person name="Mizushima T."/>
            <person name="Ito Y."/>
            <person name="Tanaka K."/>
        </authorList>
    </citation>
    <scope>FUNCTION</scope>
    <scope>MUTAGENESIS OF LEU-10; GLU-18; CYS-106 AND ALA-179</scope>
    <scope>CHARACTERIZATION OF VARIANTS PARK7 ILE-26; ASP-64; THR-104; ALA-149; LYS-163 AND PRO-166</scope>
    <scope>CHARACTERIZATION OF VARIANT SER-39</scope>
</reference>
<reference key="42">
    <citation type="journal article" date="2018" name="Proc. Natl. Acad. Sci. U.S.A.">
        <title>Methylglyoxal-derived posttranslational arginine modifications are abundant histone marks.</title>
        <authorList>
            <person name="Galligan J.J."/>
            <person name="Wepy J.A."/>
            <person name="Streeter M.D."/>
            <person name="Kingsley P.J."/>
            <person name="Mitchener M.M."/>
            <person name="Wauchope O.R."/>
            <person name="Beavers W.N."/>
            <person name="Rose K.L."/>
            <person name="Wang T."/>
            <person name="Spiegel D.A."/>
            <person name="Marnett L.J."/>
        </authorList>
    </citation>
    <scope>FUNCTION</scope>
</reference>
<reference key="43">
    <citation type="journal article" date="2019" name="IScience">
        <title>Rewiring of the Human Mitochondrial Interactome during Neuronal Reprogramming Reveals Regulators of the Respirasome and Neurogenesis.</title>
        <authorList>
            <person name="Moutaoufik M.T."/>
            <person name="Malty R."/>
            <person name="Amin S."/>
            <person name="Zhang Q."/>
            <person name="Phanse S."/>
            <person name="Gagarinova A."/>
            <person name="Zilocchi M."/>
            <person name="Hoell L."/>
            <person name="Minic Z."/>
            <person name="Gagarinova M."/>
            <person name="Aoki H."/>
            <person name="Stockwell J."/>
            <person name="Jessulat M."/>
            <person name="Goebels F."/>
            <person name="Broderick K."/>
            <person name="Scott N.E."/>
            <person name="Vlasblom J."/>
            <person name="Musso G."/>
            <person name="Prasad B."/>
            <person name="Lamantea E."/>
            <person name="Garavaglia B."/>
            <person name="Rajput A."/>
            <person name="Murayama K."/>
            <person name="Okazaki Y."/>
            <person name="Foster L.J."/>
            <person name="Bader G.D."/>
            <person name="Cayabyab F.S."/>
            <person name="Babu M."/>
        </authorList>
    </citation>
    <scope>IDENTIFICATION BY MASS SPECTROMETRY</scope>
    <scope>INTERACTION WITH NENF</scope>
    <scope>SUBCELLULAR LOCATION</scope>
</reference>
<reference key="44">
    <citation type="journal article" date="2019" name="J. Biol. Chem.">
        <title>The apparent deglycase activity of DJ-1 results from the conversion of free methylglyoxal present in fast equilibrium with hemithioacetals and hemiaminals.</title>
        <authorList>
            <person name="Andreeva A."/>
            <person name="Bekkhozhin Z."/>
            <person name="Omertassova N."/>
            <person name="Baizhumanov T."/>
            <person name="Yeltay G."/>
            <person name="Akhmetali M."/>
            <person name="Toibazar D."/>
            <person name="Utepbergenov D."/>
        </authorList>
    </citation>
    <scope>FUNCTION</scope>
    <scope>CATALYTIC ACTIVITY</scope>
    <scope>CAUTION</scope>
    <scope>BIOPHYSICOCHEMICAL PROPERTIES</scope>
    <scope>SUBUNIT</scope>
</reference>
<reference key="45">
    <citation type="journal article" date="2019" name="Nat. Commun.">
        <title>Reversible histone glycation is associated with disease-related changes in chromatin architecture.</title>
        <authorList>
            <person name="Zheng Q."/>
            <person name="Omans N.D."/>
            <person name="Leicher R."/>
            <person name="Osunsade A."/>
            <person name="Agustinus A.S."/>
            <person name="Finkin-Groner E."/>
            <person name="D'Ambrosio H."/>
            <person name="Liu B."/>
            <person name="Chandarlapaty S."/>
            <person name="Liu S."/>
            <person name="David Y."/>
        </authorList>
    </citation>
    <scope>FUNCTION</scope>
    <scope>MUTAGENESIS OF CYS-106</scope>
</reference>
<reference key="46">
    <citation type="journal article" date="2003" name="FEBS Lett.">
        <title>Crystal structure of DJ-1/RS and implication on familial Parkinson's disease.</title>
        <authorList>
            <person name="Huai Q."/>
            <person name="Sun Y."/>
            <person name="Wang H."/>
            <person name="Chin L.-S."/>
            <person name="Li L."/>
            <person name="Robinson H."/>
            <person name="Ke H."/>
        </authorList>
    </citation>
    <scope>X-RAY CRYSTALLOGRAPHY (1.6 ANGSTROMS)</scope>
    <scope>HOMODIMERIZATION</scope>
</reference>
<reference key="47">
    <citation type="journal article" date="2003" name="J. Biol. Chem.">
        <title>Crystal structure of human DJ-1, a protein associated with early onset Parkinson's disease.</title>
        <authorList>
            <person name="Tao X."/>
            <person name="Tong L."/>
        </authorList>
    </citation>
    <scope>X-RAY CRYSTALLOGRAPHY (1.7 ANGSTROMS) OF WILD-TYPE AND MUTANT ARG-130</scope>
    <scope>HOMODIMERIZATION</scope>
</reference>
<reference key="48">
    <citation type="journal article" date="2003" name="J. Biol. Chem.">
        <title>The crystal structure of DJ-1, a protein related to male fertility and Parkinson's disease.</title>
        <authorList>
            <person name="Honbou K."/>
            <person name="Suzuki N.N."/>
            <person name="Horiuchi M."/>
            <person name="Niki T."/>
            <person name="Taira T."/>
            <person name="Ariga H."/>
            <person name="Inagaki F."/>
        </authorList>
    </citation>
    <scope>X-RAY CRYSTALLOGRAPHY (1.95 ANGSTROMS)</scope>
    <scope>HOMODIMERIZATION</scope>
</reference>
<reference key="49">
    <citation type="journal article" date="2003" name="J. Biol. Chem.">
        <title>Crystal structures of human DJ-1 and Escherichia coli Hsp31, which share an evolutionarily conserved domain.</title>
        <authorList>
            <person name="Lee S.-J."/>
            <person name="Kim S.J."/>
            <person name="Kim I.-K."/>
            <person name="Ko J."/>
            <person name="Jeong C.-S."/>
            <person name="Kim G.-H."/>
            <person name="Park C."/>
            <person name="Kang S.-O."/>
            <person name="Suh P.-G."/>
            <person name="Lee H.-S."/>
            <person name="Cha S.-S."/>
        </authorList>
    </citation>
    <scope>X-RAY CRYSTALLOGRAPHY (2.5 ANGSTROMS)</scope>
    <scope>FUNCTION</scope>
    <scope>OXIDATION AT CYS-106</scope>
    <scope>HOMODIMERIZATION</scope>
</reference>
<reference key="50">
    <citation type="journal article" date="2003" name="Proc. Natl. Acad. Sci. U.S.A.">
        <title>The 1.1-A resolution crystal structure of DJ-1, the protein mutated in autosomal recessive early onset Parkinson's disease.</title>
        <authorList>
            <person name="Wilson M.A."/>
            <person name="Collins J.L."/>
            <person name="Hod Y."/>
            <person name="Ringe D."/>
            <person name="Petsko G.A."/>
        </authorList>
    </citation>
    <scope>X-RAY CRYSTALLOGRAPHY (1.1 ANGSTROMS)</scope>
    <scope>HOMODIMERIZATION</scope>
    <scope>OXIDATION</scope>
    <scope>LACK OF PROTEOLYTIC ACTIVITY</scope>
</reference>
<reference key="51">
    <citation type="journal article" date="2004" name="Proc. Natl. Acad. Sci. U.S.A.">
        <title>The Parkinson's disease protein DJ-1 is neuroprotective due to cysteine-sulfinic acid-driven mitochondrial localization.</title>
        <authorList>
            <person name="Canet-Aviles R.M."/>
            <person name="Wilson M.A."/>
            <person name="Miller D.W."/>
            <person name="Ahmad R."/>
            <person name="McLendon C."/>
            <person name="Bandyopadhyay S."/>
            <person name="Baptista M.J."/>
            <person name="Ringe D."/>
            <person name="Petsko G.A."/>
            <person name="Cookson M.R."/>
        </authorList>
    </citation>
    <scope>X-RAY CRYSTALLOGRAPHY (1.2 ANGSTROMS)</scope>
    <scope>MUTAGENESIS OF CYS-46; CYS-53 AND CYS-106</scope>
    <scope>OXIDATION</scope>
    <scope>FUNCTION</scope>
    <scope>SUBCELLULAR LOCATION</scope>
</reference>
<reference key="52">
    <citation type="journal article" date="2003" name="Ann. Neurol.">
        <title>The role of pathogenic DJ-1 mutations in Parkinson's disease.</title>
        <authorList>
            <person name="Abou-Sleiman P.M."/>
            <person name="Healy D.G."/>
            <person name="Quinn N."/>
            <person name="Lees A.J."/>
            <person name="Wood N.W."/>
        </authorList>
    </citation>
    <scope>VARIANTS PARK7 ILE-26 AND ALA-149</scope>
    <scope>VARIANT GLN-98</scope>
</reference>
<reference key="53">
    <citation type="journal article" date="2003" name="Science">
        <title>Mutations in the DJ-1 gene associated with autosomal recessive early-onset Parkinsonism.</title>
        <authorList>
            <person name="Bonifati V."/>
            <person name="Rizzu P."/>
            <person name="van Baren M.J."/>
            <person name="Schaap O."/>
            <person name="Breedveld G.J."/>
            <person name="Krieger E."/>
            <person name="Dekker M.C.J."/>
            <person name="Squitieri F."/>
            <person name="Ibanez P."/>
            <person name="Joosse M."/>
            <person name="van Dongen J.W."/>
            <person name="Vanacore N."/>
            <person name="van Swieten J.C."/>
            <person name="Brice A."/>
            <person name="Meco G."/>
            <person name="van Duijn C.M."/>
            <person name="Oostra B.A."/>
            <person name="Heutink P."/>
        </authorList>
    </citation>
    <scope>VARIANT PARK7 PRO-166</scope>
    <scope>SUBCELLULAR LOCATION</scope>
</reference>
<reference key="54">
    <citation type="journal article" date="2004" name="Ann. Neurol.">
        <title>The R98Q variation in DJ-1 represents a rare polymorphism.</title>
        <authorList>
            <person name="Hedrich K."/>
            <person name="Schaefer N."/>
            <person name="Hering R."/>
            <person name="Hagenah J."/>
            <person name="Lanthaler A.J."/>
            <person name="Schwinger E."/>
            <person name="Kramer P.L."/>
            <person name="Ozelius L.J."/>
            <person name="Bressman S.B."/>
            <person name="Abbruzzese G."/>
            <person name="Martinelli P."/>
            <person name="Kostic V."/>
            <person name="Pramstaller P.P."/>
            <person name="Vieregge P."/>
            <person name="Riess O."/>
            <person name="Klein C."/>
        </authorList>
    </citation>
    <scope>VARIANT GLN-98</scope>
</reference>
<reference key="55">
    <citation type="journal article" date="2004" name="Hum. Mutat.">
        <title>Novel homozygous p.E64D mutation in DJ1 in early onset Parkinson disease (PARK7).</title>
        <authorList>
            <person name="Hering R."/>
            <person name="Strauss K.M."/>
            <person name="Tao X."/>
            <person name="Bauer A."/>
            <person name="Woitalla D."/>
            <person name="Mietz E.M."/>
            <person name="Petrovic S."/>
            <person name="Bauer P."/>
            <person name="Schaible W."/>
            <person name="Mueller T."/>
            <person name="Schoels L."/>
            <person name="Klein C."/>
            <person name="Berg D."/>
            <person name="Meyer P.T."/>
            <person name="Schulz J.B."/>
            <person name="Wollnik B."/>
            <person name="Tong L."/>
            <person name="Krueger R."/>
            <person name="Riess O."/>
        </authorList>
    </citation>
    <scope>VARIANT PARK7 ASP-64</scope>
    <scope>X-RAY CRYSTALLOGRAPHY (1.8 ANGSTROMS)</scope>
</reference>
<reference key="56">
    <citation type="journal article" date="2004" name="J. Biol. Chem.">
        <title>Differential effects of Parkinson's disease-associated mutations on stability and folding of DJ-1.</title>
        <authorList>
            <person name="Goerner K."/>
            <person name="Holtorf E."/>
            <person name="Odoy S."/>
            <person name="Nuscher B."/>
            <person name="Yamamoto A."/>
            <person name="Regula J.T."/>
            <person name="Beyer K."/>
            <person name="Haass C."/>
            <person name="Kahle P.J."/>
        </authorList>
    </citation>
    <scope>CHARACTERIZATION OF VARIANTS PARK7 ASP-64 AND PRO-166</scope>
</reference>
<reference key="57">
    <citation type="journal article" date="2004" name="Mov. Disord.">
        <title>Analysis of an early-onset Parkinson's disease cohort for DJ-1 mutations.</title>
        <authorList>
            <person name="Clark L.N."/>
            <person name="Afridi S."/>
            <person name="Mejia-Santana H."/>
            <person name="Harris J."/>
            <person name="Louis E.D."/>
            <person name="Cote L.J."/>
            <person name="Andrews H."/>
            <person name="Singleton A."/>
            <person name="Wavrant De-Vrieze F."/>
            <person name="Hardy J."/>
            <person name="Mayeux R."/>
            <person name="Fahn S."/>
            <person name="Waters C."/>
            <person name="Ford B."/>
            <person name="Frucht S."/>
            <person name="Ottman R."/>
            <person name="Marder K."/>
        </authorList>
    </citation>
    <scope>VARIANT PARK7 THR-104</scope>
    <scope>VARIANTS GLN-98 AND SER-171</scope>
</reference>
<reference key="58">
    <citation type="journal article" date="2004" name="Neurology">
        <title>DJ-1 (PARK7) mutations are less frequent than Parkin (PARK2) mutations in early-onset Parkinson disease.</title>
        <authorList>
            <person name="Hedrich K."/>
            <person name="Djarmati A."/>
            <person name="Schafer N."/>
            <person name="Hering R."/>
            <person name="Wellenbrock C."/>
            <person name="Weiss P.H."/>
            <person name="Hilker R."/>
            <person name="Vieregge P."/>
            <person name="Ozelius L.J."/>
            <person name="Heutink P."/>
            <person name="Bonifati V."/>
            <person name="Schwinger E."/>
            <person name="Lang A.E."/>
            <person name="Noth J."/>
            <person name="Bressman S.B."/>
            <person name="Pramstaller P.P."/>
            <person name="Riess O."/>
            <person name="Klein C."/>
        </authorList>
    </citation>
    <scope>VARIANT GLN-98</scope>
</reference>
<reference key="59">
    <citation type="journal article" date="2005" name="Ann. Neurol.">
        <title>DJ-1 mutations and parkinsonism-dementia-amyotrophic lateral sclerosis complex.</title>
        <authorList>
            <person name="Annesi G."/>
            <person name="Savettieri G."/>
            <person name="Pugliese P."/>
            <person name="D'Amelio M."/>
            <person name="Tarantino P."/>
            <person name="Ragonese P."/>
            <person name="La Bella V."/>
            <person name="Piccoli T."/>
            <person name="Civitelli D."/>
            <person name="Annesi F."/>
            <person name="Fierro B."/>
            <person name="Piccoli F."/>
            <person name="Arabia G."/>
            <person name="Caracciolo M."/>
            <person name="Ciro Candiano I.C."/>
            <person name="Quattrone A."/>
        </authorList>
    </citation>
    <scope>VARIANT PARK7 LYS-163</scope>
</reference>
<reference key="60">
    <citation type="journal article" date="2006" name="Hum. Mol. Genet.">
        <title>Association of PINK1 and DJ-1 confers digenic inheritance of early-onset Parkinson's disease.</title>
        <authorList>
            <person name="Tang B."/>
            <person name="Xiong H."/>
            <person name="Sun P."/>
            <person name="Zhang Y."/>
            <person name="Wang D."/>
            <person name="Hu Z."/>
            <person name="Zhu Z."/>
            <person name="Ma H."/>
            <person name="Pan Q."/>
            <person name="Xia J.-H."/>
            <person name="Xia K."/>
            <person name="Zhang Z."/>
        </authorList>
    </citation>
    <scope>VARIANT SER-39</scope>
</reference>
<reference key="61">
    <citation type="journal article" date="2007" name="J. Cell Biol.">
        <title>Parkin-mediated K63-linked polyubiquitination targets misfolded DJ-1 to aggresomes via binding to HDAC6.</title>
        <authorList>
            <person name="Olzmann J.A."/>
            <person name="Li L."/>
            <person name="Chudaev M.V."/>
            <person name="Chen J."/>
            <person name="Perez F.A."/>
            <person name="Palmiter R.D."/>
            <person name="Chin L.S."/>
        </authorList>
    </citation>
    <scope>CHARACTERIZATION OF VARIANT PARK7 PRO-166</scope>
</reference>
<reference key="62">
    <citation type="journal article" date="2008" name="Mov. Disord.">
        <title>Mutation analysis of Parkin, PINK1, DJ-1 and ATP13A2 genes in Chinese patients with autosomal recessive early-onset Parkinsonism.</title>
        <authorList>
            <person name="Guo J.F."/>
            <person name="Xiao B."/>
            <person name="Liao B."/>
            <person name="Zhang X.W."/>
            <person name="Nie L.L."/>
            <person name="Zhang Y.H."/>
            <person name="Shen L."/>
            <person name="Jiang H."/>
            <person name="Xia K."/>
            <person name="Pan Q."/>
            <person name="Yan X.X."/>
            <person name="Tang B.S."/>
        </authorList>
    </citation>
    <scope>VARIANT PARK7 PRO-10</scope>
</reference>
<reference key="63">
    <citation type="journal article" date="2010" name="PLoS ONE">
        <title>Reduced basal autophagy and impaired mitochondrial dynamics due to loss of Parkinson's disease-associated protein DJ-1.</title>
        <authorList>
            <person name="Krebiehl G."/>
            <person name="Ruckerbauer S."/>
            <person name="Burbulla L.F."/>
            <person name="Kieper N."/>
            <person name="Maurer B."/>
            <person name="Waak J."/>
            <person name="Wolburg H."/>
            <person name="Gizatullina Z."/>
            <person name="Gellerich F.N."/>
            <person name="Woitalla D."/>
            <person name="Riess O."/>
            <person name="Kahle P.J."/>
            <person name="Proikas-Cezanne T."/>
            <person name="Kruger R."/>
        </authorList>
    </citation>
    <scope>VARIANT ASP-64</scope>
    <scope>FUNCTION</scope>
</reference>
<reference key="64">
    <citation type="journal article" date="2016" name="Parkinsonism Relat. Disord.">
        <title>A novel homozygous DJ1 mutation causes parkinsonism and ALS in a Turkish family.</title>
        <authorList>
            <person name="Hanagasi H.A."/>
            <person name="Giri A."/>
            <person name="Kartal E."/>
            <person name="Guven G."/>
            <person name="Bilgic B."/>
            <person name="Hauser A.K."/>
            <person name="Emre M."/>
            <person name="Heutink P."/>
            <person name="Basak N."/>
            <person name="Gasser T."/>
            <person name="Simon-Sanchez J."/>
            <person name="Lohmann E."/>
        </authorList>
    </citation>
    <scope>VARIANT PARK7 GLN-45 DEL</scope>
</reference>
<reference key="65">
    <citation type="journal article" date="2019" name="Parkinsonism Relat. Disord.">
        <title>Familial early onset Parkinson's disease caused by a homozygous frameshift variant in PARK7: Clinical features and literature update.</title>
        <authorList>
            <person name="Stephenson S.E."/>
            <person name="Djaldetti R."/>
            <person name="Rafehi H."/>
            <person name="Wilson G.R."/>
            <person name="Gillies G."/>
            <person name="Bahlo M."/>
            <person name="Lockhart P.J."/>
        </authorList>
    </citation>
    <scope>INVOLVEMENT IN PARK7</scope>
</reference>
<comment type="function">
    <text evidence="2 3 5 8 9 17 19 22 23 25 27 29 30 32 33 34 35 36 38 39 40 42 44 45 46 47 48 52">Multifunctional protein with controversial molecular function which plays an important role in cell protection against oxidative stress and cell death acting as oxidative stress sensor and redox-sensitive chaperone and protease (PubMed:12796482, PubMed:17015834, PubMed:18711745, PubMed:19229105, PubMed:20304780, PubMed:25416785, PubMed:26995087, PubMed:28993701). It is involved in neuroprotective mechanisms like the stabilization of NFE2L2 and PINK1 proteins, male fertility as a positive regulator of androgen signaling pathway as well as cell growth and transformation through, for instance, the modulation of NF-kappa-B signaling pathway (PubMed:12612053, PubMed:14749723, PubMed:15502874, PubMed:17015834, PubMed:18711745, PubMed:21097510). Has been described as a protein and nucleotide deglycase that catalyzes the deglycation of the Maillard adducts formed between amino groups of proteins or nucleotides and reactive carbonyl groups of glyoxals (PubMed:25416785, PubMed:28596309). But this function is rebuted by other works (PubMed:27903648, PubMed:31653696). As a protein deglycase, repairs methylglyoxal- and glyoxal-glycated proteins, and releases repaired proteins and lactate or glycolate, respectively. Deglycates cysteine, arginine and lysine residues in proteins, and thus reactivates these proteins by reversing glycation by glyoxals. Acts on early glycation intermediates (hemithioacetals and aminocarbinols), preventing the formation of advanced glycation endproducts (AGE) that cause irreversible damage (PubMed:25416785, PubMed:26995087, PubMed:28013050). Also functions as a nucleotide deglycase able to repair glycated guanine in the free nucleotide pool (GTP, GDP, GMP, dGTP) and in DNA and RNA. Is thus involved in a major nucleotide repair system named guanine glycation repair (GG repair), dedicated to reversing methylglyoxal and glyoxal damage via nucleotide sanitization and direct nucleic acid repair (PubMed:28596309). Protects histones from adduction by methylglyoxal, controls the levels of methylglyoxal-derived argininine modifications on chromatin (PubMed:30150385). Able to remove the glycations and restore histone 3, histone glycation disrupts both local and global chromatin architecture by altering histone-DNA interactions as well as histone acetylation and ubiquitination levels (PubMed:30150385, PubMed:30894531). Displays a very low glyoxalase activity that may reflect its deglycase activity (PubMed:22523093, PubMed:28993701, PubMed:31653696). Eliminates hydrogen peroxide and protects cells against hydrogen peroxide-induced cell death (PubMed:16390825). Required for correct mitochondrial morphology and function as well as for autophagy of dysfunctional mitochondria (PubMed:16632486, PubMed:19229105). Plays a role in regulating expression or stability of the mitochondrial uncoupling proteins SLC25A14 and SLC25A27 in dopaminergic neurons of the substantia nigra pars compacta and attenuates the oxidative stress induced by calcium entry into the neurons via L-type channels during pacemaking (PubMed:18711745). Regulates astrocyte inflammatory responses, may modulate lipid rafts-dependent endocytosis in astrocytes and neuronal cells (PubMed:23847046). In pancreatic islets, involved in the maintenance of mitochondrial reactive oxygen species (ROS) levels and glucose homeostasis in an age- and diet dependent manner. Protects pancreatic beta cells from cell death induced by inflammatory and cytotoxic setting (By similarity). Binds to a number of mRNAs containing multiple copies of GG or CC motifs and partially inhibits their translation but dissociates following oxidative stress (PubMed:18626009). Metal-binding protein able to bind copper as well as toxic mercury ions, enhances the cell protection mechanism against induced metal toxicity (PubMed:23792957). In macrophages, interacts with the NADPH oxidase subunit NCF1 to direct NADPH oxidase-dependent ROS production, and protects against sepsis (By similarity).</text>
</comment>
<comment type="catalytic activity">
    <reaction evidence="40">
        <text>N(omega)-(1-hydroxy-2-oxopropyl)-L-arginyl-[protein] + H2O = lactate + L-arginyl-[protein] + H(+)</text>
        <dbReference type="Rhea" id="RHEA:49548"/>
        <dbReference type="Rhea" id="RHEA-COMP:10532"/>
        <dbReference type="Rhea" id="RHEA-COMP:12428"/>
        <dbReference type="ChEBI" id="CHEBI:15377"/>
        <dbReference type="ChEBI" id="CHEBI:15378"/>
        <dbReference type="ChEBI" id="CHEBI:24996"/>
        <dbReference type="ChEBI" id="CHEBI:29965"/>
        <dbReference type="ChEBI" id="CHEBI:131708"/>
        <dbReference type="EC" id="3.5.1.124"/>
    </reaction>
</comment>
<comment type="catalytic activity">
    <reaction evidence="40">
        <text>N(6)-(1-hydroxy-2-oxopropyl)-L-lysyl-[protein] + H2O = lactate + L-lysyl-[protein] + H(+)</text>
        <dbReference type="Rhea" id="RHEA:49552"/>
        <dbReference type="Rhea" id="RHEA-COMP:9752"/>
        <dbReference type="Rhea" id="RHEA-COMP:12429"/>
        <dbReference type="ChEBI" id="CHEBI:15377"/>
        <dbReference type="ChEBI" id="CHEBI:15378"/>
        <dbReference type="ChEBI" id="CHEBI:24996"/>
        <dbReference type="ChEBI" id="CHEBI:29969"/>
        <dbReference type="ChEBI" id="CHEBI:131709"/>
        <dbReference type="EC" id="3.5.1.124"/>
    </reaction>
</comment>
<comment type="catalytic activity">
    <reaction evidence="40">
        <text>S-(1-hydroxy-2-oxopropyl)-L-cysteinyl-[protein] + H2O = lactate + L-cysteinyl-[protein] + H(+)</text>
        <dbReference type="Rhea" id="RHEA:49556"/>
        <dbReference type="Rhea" id="RHEA-COMP:10131"/>
        <dbReference type="Rhea" id="RHEA-COMP:12430"/>
        <dbReference type="ChEBI" id="CHEBI:15377"/>
        <dbReference type="ChEBI" id="CHEBI:15378"/>
        <dbReference type="ChEBI" id="CHEBI:24996"/>
        <dbReference type="ChEBI" id="CHEBI:29950"/>
        <dbReference type="ChEBI" id="CHEBI:131710"/>
        <dbReference type="EC" id="3.5.1.124"/>
    </reaction>
</comment>
<comment type="catalytic activity">
    <reaction evidence="40">
        <text>N(omega)-(1-hydroxy-2-oxoethyl)-L-arginyl-[protein] + H2O = L-arginyl-[protein] + glycolate + H(+)</text>
        <dbReference type="Rhea" id="RHEA:57188"/>
        <dbReference type="Rhea" id="RHEA-COMP:10532"/>
        <dbReference type="Rhea" id="RHEA-COMP:14844"/>
        <dbReference type="ChEBI" id="CHEBI:15377"/>
        <dbReference type="ChEBI" id="CHEBI:15378"/>
        <dbReference type="ChEBI" id="CHEBI:29805"/>
        <dbReference type="ChEBI" id="CHEBI:29965"/>
        <dbReference type="ChEBI" id="CHEBI:141553"/>
        <dbReference type="EC" id="3.5.1.124"/>
    </reaction>
</comment>
<comment type="catalytic activity">
    <reaction evidence="40">
        <text>N(6)-(1-hydroxy-2-oxoethyl)-L-lysyl-[protein] + H2O = glycolate + L-lysyl-[protein] + H(+)</text>
        <dbReference type="Rhea" id="RHEA:57192"/>
        <dbReference type="Rhea" id="RHEA-COMP:9752"/>
        <dbReference type="Rhea" id="RHEA-COMP:14845"/>
        <dbReference type="ChEBI" id="CHEBI:15377"/>
        <dbReference type="ChEBI" id="CHEBI:15378"/>
        <dbReference type="ChEBI" id="CHEBI:29805"/>
        <dbReference type="ChEBI" id="CHEBI:29969"/>
        <dbReference type="ChEBI" id="CHEBI:141554"/>
        <dbReference type="EC" id="3.5.1.124"/>
    </reaction>
</comment>
<comment type="catalytic activity">
    <reaction evidence="40">
        <text>S-(1-hydroxy-2-oxoethyl)-L-cysteinyl-[protein] + H2O = glycolate + L-cysteinyl-[protein] + H(+)</text>
        <dbReference type="Rhea" id="RHEA:57196"/>
        <dbReference type="Rhea" id="RHEA-COMP:10131"/>
        <dbReference type="Rhea" id="RHEA-COMP:14846"/>
        <dbReference type="ChEBI" id="CHEBI:15377"/>
        <dbReference type="ChEBI" id="CHEBI:15378"/>
        <dbReference type="ChEBI" id="CHEBI:29805"/>
        <dbReference type="ChEBI" id="CHEBI:29950"/>
        <dbReference type="ChEBI" id="CHEBI:141555"/>
        <dbReference type="EC" id="3.5.1.124"/>
    </reaction>
</comment>
<comment type="catalytic activity">
    <reaction evidence="45">
        <text>N(2)-(1-hydroxy-2-oxopropyl)-dGTP + H2O = lactate + dGTP + H(+)</text>
        <dbReference type="Rhea" id="RHEA:57244"/>
        <dbReference type="ChEBI" id="CHEBI:15377"/>
        <dbReference type="ChEBI" id="CHEBI:15378"/>
        <dbReference type="ChEBI" id="CHEBI:24996"/>
        <dbReference type="ChEBI" id="CHEBI:61429"/>
        <dbReference type="ChEBI" id="CHEBI:141569"/>
    </reaction>
</comment>
<comment type="catalytic activity">
    <reaction evidence="45">
        <text>N(2)-(1-hydroxy-2-oxopropyl)-GTP + H2O = lactate + GTP + H(+)</text>
        <dbReference type="Rhea" id="RHEA:57256"/>
        <dbReference type="ChEBI" id="CHEBI:15377"/>
        <dbReference type="ChEBI" id="CHEBI:15378"/>
        <dbReference type="ChEBI" id="CHEBI:24996"/>
        <dbReference type="ChEBI" id="CHEBI:37565"/>
        <dbReference type="ChEBI" id="CHEBI:141570"/>
    </reaction>
</comment>
<comment type="catalytic activity">
    <reaction evidence="45">
        <text>N(2)-(1-hydroxy-2-oxopropyl)-GDP + H2O = lactate + GDP + H(+)</text>
        <dbReference type="Rhea" id="RHEA:57260"/>
        <dbReference type="ChEBI" id="CHEBI:15377"/>
        <dbReference type="ChEBI" id="CHEBI:15378"/>
        <dbReference type="ChEBI" id="CHEBI:24996"/>
        <dbReference type="ChEBI" id="CHEBI:58189"/>
        <dbReference type="ChEBI" id="CHEBI:141573"/>
    </reaction>
</comment>
<comment type="catalytic activity">
    <reaction evidence="45">
        <text>N(2)-(1-hydroxy-2-oxopropyl)-GMP + H2O = lactate + GMP + H(+)</text>
        <dbReference type="Rhea" id="RHEA:57268"/>
        <dbReference type="ChEBI" id="CHEBI:15377"/>
        <dbReference type="ChEBI" id="CHEBI:15378"/>
        <dbReference type="ChEBI" id="CHEBI:24996"/>
        <dbReference type="ChEBI" id="CHEBI:58115"/>
        <dbReference type="ChEBI" id="CHEBI:141575"/>
    </reaction>
</comment>
<comment type="catalytic activity">
    <reaction evidence="58">
        <text>N(2)-(1-hydroxy-2-oxoethyl)-dGTP + H2O = dGTP + glycolate + H(+)</text>
        <dbReference type="Rhea" id="RHEA:57248"/>
        <dbReference type="ChEBI" id="CHEBI:15377"/>
        <dbReference type="ChEBI" id="CHEBI:15378"/>
        <dbReference type="ChEBI" id="CHEBI:29805"/>
        <dbReference type="ChEBI" id="CHEBI:61429"/>
        <dbReference type="ChEBI" id="CHEBI:141572"/>
    </reaction>
</comment>
<comment type="catalytic activity">
    <reaction evidence="45">
        <text>N(2)-(1-hydroxy-2-oxoethyl)-GTP + H2O = glycolate + GTP + H(+)</text>
        <dbReference type="Rhea" id="RHEA:57252"/>
        <dbReference type="ChEBI" id="CHEBI:15377"/>
        <dbReference type="ChEBI" id="CHEBI:15378"/>
        <dbReference type="ChEBI" id="CHEBI:29805"/>
        <dbReference type="ChEBI" id="CHEBI:37565"/>
        <dbReference type="ChEBI" id="CHEBI:141571"/>
    </reaction>
</comment>
<comment type="catalytic activity">
    <reaction evidence="58">
        <text>N(2)-(1-hydroxy-2-oxoethyl)-GDP + H2O = glycolate + GDP + H(+)</text>
        <dbReference type="Rhea" id="RHEA:57264"/>
        <dbReference type="ChEBI" id="CHEBI:15377"/>
        <dbReference type="ChEBI" id="CHEBI:15378"/>
        <dbReference type="ChEBI" id="CHEBI:29805"/>
        <dbReference type="ChEBI" id="CHEBI:58189"/>
        <dbReference type="ChEBI" id="CHEBI:141574"/>
    </reaction>
</comment>
<comment type="catalytic activity">
    <reaction evidence="58">
        <text>N(2)-(1-hydroxy-2-oxoethyl)-GMP + H2O = glycolate + GMP + H(+)</text>
        <dbReference type="Rhea" id="RHEA:57304"/>
        <dbReference type="ChEBI" id="CHEBI:15377"/>
        <dbReference type="ChEBI" id="CHEBI:15378"/>
        <dbReference type="ChEBI" id="CHEBI:29805"/>
        <dbReference type="ChEBI" id="CHEBI:58115"/>
        <dbReference type="ChEBI" id="CHEBI:141576"/>
    </reaction>
</comment>
<comment type="catalytic activity">
    <reaction evidence="45">
        <text>an N(2)-(1-hydroxy-2-oxopropyl)-guanosine in RNA + H2O = a guanosine in RNA + lactate + H(+)</text>
        <dbReference type="Rhea" id="RHEA:57288"/>
        <dbReference type="Rhea" id="RHEA-COMP:14855"/>
        <dbReference type="Rhea" id="RHEA-COMP:14858"/>
        <dbReference type="ChEBI" id="CHEBI:15377"/>
        <dbReference type="ChEBI" id="CHEBI:15378"/>
        <dbReference type="ChEBI" id="CHEBI:24996"/>
        <dbReference type="ChEBI" id="CHEBI:74269"/>
        <dbReference type="ChEBI" id="CHEBI:141580"/>
    </reaction>
</comment>
<comment type="catalytic activity">
    <reaction evidence="45">
        <text>an N(2)-(1-hydroxy-2-oxopropyl)-2'-deoxyguanosine in DNA + H2O = a 2'-deoxyguanosine in DNA + lactate + H(+)</text>
        <dbReference type="Rhea" id="RHEA:57300"/>
        <dbReference type="Rhea" id="RHEA-COMP:11367"/>
        <dbReference type="Rhea" id="RHEA-COMP:14856"/>
        <dbReference type="ChEBI" id="CHEBI:15377"/>
        <dbReference type="ChEBI" id="CHEBI:15378"/>
        <dbReference type="ChEBI" id="CHEBI:24996"/>
        <dbReference type="ChEBI" id="CHEBI:85445"/>
        <dbReference type="ChEBI" id="CHEBI:141578"/>
    </reaction>
</comment>
<comment type="catalytic activity">
    <reaction evidence="58">
        <text>an N(2)-(1-hydroxy-2-oxoethyl)-guanosine in RNA + H2O = a guanosine in RNA + glycolate + H(+)</text>
        <dbReference type="Rhea" id="RHEA:57292"/>
        <dbReference type="Rhea" id="RHEA-COMP:14855"/>
        <dbReference type="Rhea" id="RHEA-COMP:14859"/>
        <dbReference type="ChEBI" id="CHEBI:15377"/>
        <dbReference type="ChEBI" id="CHEBI:15378"/>
        <dbReference type="ChEBI" id="CHEBI:29805"/>
        <dbReference type="ChEBI" id="CHEBI:74269"/>
        <dbReference type="ChEBI" id="CHEBI:141581"/>
    </reaction>
</comment>
<comment type="catalytic activity">
    <reaction evidence="58">
        <text>an N(2)-(1-hydroxy-2-oxoethyl)-2'-deoxyguanosine in DNA + H2O = a 2'-deoxyguanosine in DNA + glycolate + H(+)</text>
        <dbReference type="Rhea" id="RHEA:57296"/>
        <dbReference type="Rhea" id="RHEA-COMP:11367"/>
        <dbReference type="Rhea" id="RHEA-COMP:14857"/>
        <dbReference type="ChEBI" id="CHEBI:15377"/>
        <dbReference type="ChEBI" id="CHEBI:15378"/>
        <dbReference type="ChEBI" id="CHEBI:29805"/>
        <dbReference type="ChEBI" id="CHEBI:85445"/>
        <dbReference type="ChEBI" id="CHEBI:141579"/>
    </reaction>
</comment>
<comment type="cofactor">
    <text evidence="40 46">Deglycase activity does not require glutathione as a cofactor, however, glycated glutathione constitutes a PARK7 substrate.</text>
</comment>
<comment type="biophysicochemical properties">
    <kinetics>
        <KM evidence="34">173.4 uM for casein</KM>
        <KM evidence="40">0.44 mM for glycated N-acetylarginine (at pH 7.0 and 22 degrees Celsius)</KM>
        <KM evidence="40">0.35 mM for glycated N-acetyllysine (at pH 7.0 and 22 degrees Celsius)</KM>
        <KM evidence="40">0.32 mM for glycated N-acetylcysteine (at pH 7.0 and 22 degrees Celsius)</KM>
        <text evidence="40 51">kcat is 0.27 sec(-1) for the deglycation of glycated N-acetylarginine. kcat is 0.28 sec(-1) for the deglycation of glycated N-acetyllysine. kcat is 0.42 sec(-1) for the deglycation of glycated N-acetylcysteine. kcat is 0.02 sec(-1) for glyoxalase activity (PubMed:31653696).</text>
    </kinetics>
</comment>
<comment type="subunit">
    <text evidence="2 3 5 6 7 8 25 35 50 51">Homodimer (PubMed:12796482, PubMed:12851414, PubMed:12855764, PubMed:31653696). Binds EFCAB6/DJBP and PIAS2 (PubMed:11477070, PubMed:12612053, PubMed:12851414). Part of a ternary complex containing PARK7, EFCAB6/DJBP and AR (PubMed:12612053). Interacts (via N-terminus) with OTUD7B (PubMed:21097510). Interacts with BBS1, HIPK1, CLCF1 and MTERF (PubMed:16390825, PubMed:21097510). Forms a complex with PINK1 and PRKN (PubMed:19229105). Interacts (via C-terminus) with NCF1; the interaction is enhanced by LPS and modulates NCF1 phosphorylation and membrane translocation (By similarity). Interacts with NENF (PubMed:31536960).</text>
</comment>
<comment type="interaction">
    <interactant intactId="EBI-1164361">
        <id>Q99497</id>
    </interactant>
    <interactant intactId="EBI-640741">
        <id>P01023</id>
        <label>A2M</label>
    </interactant>
    <organismsDiffer>false</organismsDiffer>
    <experiments>3</experiments>
</comment>
<comment type="interaction">
    <interactant intactId="EBI-1164361">
        <id>Q99497</id>
    </interactant>
    <interactant intactId="EBI-11529439">
        <id>P63010-2</id>
        <label>AP2B1</label>
    </interactant>
    <organismsDiffer>false</organismsDiffer>
    <experiments>3</experiments>
</comment>
<comment type="interaction">
    <interactant intactId="EBI-1164361">
        <id>Q99497</id>
    </interactant>
    <interactant intactId="EBI-77613">
        <id>P05067</id>
        <label>APP</label>
    </interactant>
    <organismsDiffer>false</organismsDiffer>
    <experiments>3</experiments>
</comment>
<comment type="interaction">
    <interactant intactId="EBI-1164361">
        <id>Q99497</id>
    </interactant>
    <interactant intactId="EBI-608057">
        <id>P10275</id>
        <label>AR</label>
    </interactant>
    <organismsDiffer>false</organismsDiffer>
    <experiments>6</experiments>
</comment>
<comment type="interaction">
    <interactant intactId="EBI-1164361">
        <id>Q99497</id>
    </interactant>
    <interactant intactId="EBI-1805484">
        <id>Q8NFJ9</id>
        <label>BBS1</label>
    </interactant>
    <organismsDiffer>false</organismsDiffer>
    <experiments>4</experiments>
</comment>
<comment type="interaction">
    <interactant intactId="EBI-1164361">
        <id>Q99497</id>
    </interactant>
    <interactant intactId="EBI-25850646">
        <id>Q8N5S9-2</id>
        <label>CAMKK1</label>
    </interactant>
    <organismsDiffer>false</organismsDiffer>
    <experiments>3</experiments>
</comment>
<comment type="interaction">
    <interactant intactId="EBI-1164361">
        <id>Q99497</id>
    </interactant>
    <interactant intactId="EBI-77321">
        <id>Q9UER7</id>
        <label>DAXX</label>
    </interactant>
    <organismsDiffer>false</organismsDiffer>
    <experiments>6</experiments>
</comment>
<comment type="interaction">
    <interactant intactId="EBI-1164361">
        <id>Q99497</id>
    </interactant>
    <interactant intactId="EBI-10968534">
        <id>P50570-2</id>
        <label>DNM2</label>
    </interactant>
    <organismsDiffer>false</organismsDiffer>
    <experiments>3</experiments>
</comment>
<comment type="interaction">
    <interactant intactId="EBI-1164361">
        <id>Q99497</id>
    </interactant>
    <interactant intactId="EBI-494804">
        <id>Q13158</id>
        <label>FADD</label>
    </interactant>
    <organismsDiffer>false</organismsDiffer>
    <experiments>9</experiments>
</comment>
<comment type="interaction">
    <interactant intactId="EBI-1164361">
        <id>Q99497</id>
    </interactant>
    <interactant intactId="EBI-10691738">
        <id>P06241-3</id>
        <label>FYN</label>
    </interactant>
    <organismsDiffer>false</organismsDiffer>
    <experiments>3</experiments>
</comment>
<comment type="interaction">
    <interactant intactId="EBI-1164361">
        <id>Q99497</id>
    </interactant>
    <interactant intactId="EBI-349832">
        <id>Q9HD26</id>
        <label>GOPC</label>
    </interactant>
    <organismsDiffer>false</organismsDiffer>
    <experiments>3</experiments>
</comment>
<comment type="interaction">
    <interactant intactId="EBI-1164361">
        <id>Q99497</id>
    </interactant>
    <interactant intactId="EBI-466029">
        <id>P42858</id>
        <label>HTT</label>
    </interactant>
    <organismsDiffer>false</organismsDiffer>
    <experiments>6</experiments>
</comment>
<comment type="interaction">
    <interactant intactId="EBI-1164361">
        <id>Q99497</id>
    </interactant>
    <interactant intactId="EBI-21911304">
        <id>Q6DN90-2</id>
        <label>IQSEC1</label>
    </interactant>
    <organismsDiffer>false</organismsDiffer>
    <experiments>3</experiments>
</comment>
<comment type="interaction">
    <interactant intactId="EBI-1164361">
        <id>Q99497</id>
    </interactant>
    <interactant intactId="EBI-1044640">
        <id>Q9BYQ4</id>
        <label>KRTAP9-2</label>
    </interactant>
    <organismsDiffer>false</organismsDiffer>
    <experiments>3</experiments>
</comment>
<comment type="interaction">
    <interactant intactId="EBI-1164361">
        <id>Q99497</id>
    </interactant>
    <interactant intactId="EBI-1108377">
        <id>Q9BYZ2</id>
        <label>LDHAL6B</label>
    </interactant>
    <organismsDiffer>false</organismsDiffer>
    <experiments>3</experiments>
</comment>
<comment type="interaction">
    <interactant intactId="EBI-1164361">
        <id>Q99497</id>
    </interactant>
    <interactant intactId="EBI-1783035">
        <id>O94776</id>
        <label>MTA2</label>
    </interactant>
    <organismsDiffer>false</organismsDiffer>
    <experiments>3</experiments>
</comment>
<comment type="interaction">
    <interactant intactId="EBI-1164361">
        <id>Q99497</id>
    </interactant>
    <interactant intactId="EBI-1059321">
        <id>Q8NFH3</id>
        <label>NUP43</label>
    </interactant>
    <organismsDiffer>false</organismsDiffer>
    <experiments>3</experiments>
</comment>
<comment type="interaction">
    <interactant intactId="EBI-1164361">
        <id>Q99497</id>
    </interactant>
    <interactant intactId="EBI-1058491">
        <id>Q96FW1</id>
        <label>OTUB1</label>
    </interactant>
    <organismsDiffer>false</organismsDiffer>
    <experiments>4</experiments>
</comment>
<comment type="interaction">
    <interactant intactId="EBI-1164361">
        <id>Q99497</id>
    </interactant>
    <interactant intactId="EBI-527784">
        <id>Q6GQQ9</id>
        <label>OTUD7B</label>
    </interactant>
    <organismsDiffer>false</organismsDiffer>
    <experiments>3</experiments>
</comment>
<comment type="interaction">
    <interactant intactId="EBI-1164361">
        <id>Q99497</id>
    </interactant>
    <interactant intactId="EBI-1164361">
        <id>Q99497</id>
        <label>PARK7</label>
    </interactant>
    <organismsDiffer>false</organismsDiffer>
    <experiments>3</experiments>
</comment>
<comment type="interaction">
    <interactant intactId="EBI-1164361">
        <id>Q99497</id>
    </interactant>
    <interactant intactId="EBI-848624">
        <id>P32322</id>
        <label>PYCR1</label>
    </interactant>
    <organismsDiffer>false</organismsDiffer>
    <experiments>5</experiments>
</comment>
<comment type="interaction">
    <interactant intactId="EBI-1164361">
        <id>Q99497</id>
    </interactant>
    <interactant intactId="EBI-296739">
        <id>P63244</id>
        <label>RACK1</label>
    </interactant>
    <organismsDiffer>false</organismsDiffer>
    <experiments>4</experiments>
</comment>
<comment type="interaction">
    <interactant intactId="EBI-1164361">
        <id>Q99497</id>
    </interactant>
    <interactant intactId="EBI-21535400">
        <id>Q6ZNA4-2</id>
        <label>RNF111</label>
    </interactant>
    <organismsDiffer>false</organismsDiffer>
    <experiments>3</experiments>
</comment>
<comment type="interaction">
    <interactant intactId="EBI-1164361">
        <id>Q99497</id>
    </interactant>
    <interactant intactId="EBI-25829984">
        <id>Q9ULX5</id>
        <label>RNF112</label>
    </interactant>
    <organismsDiffer>false</organismsDiffer>
    <experiments>3</experiments>
</comment>
<comment type="interaction">
    <interactant intactId="EBI-1164361">
        <id>Q99497</id>
    </interactant>
    <interactant intactId="EBI-358545">
        <id>Q9GZS3</id>
        <label>SKIC8</label>
    </interactant>
    <organismsDiffer>false</organismsDiffer>
    <experiments>3</experiments>
</comment>
<comment type="interaction">
    <interactant intactId="EBI-1164361">
        <id>Q99497</id>
    </interactant>
    <interactant intactId="EBI-2510414">
        <id>Q8IUW3</id>
        <label>SPATA2L</label>
    </interactant>
    <organismsDiffer>false</organismsDiffer>
    <experiments>3</experiments>
</comment>
<comment type="interaction">
    <interactant intactId="EBI-1164361">
        <id>Q99497</id>
    </interactant>
    <interactant intactId="EBI-25847109">
        <id>O14656-2</id>
        <label>TOR1A</label>
    </interactant>
    <organismsDiffer>false</organismsDiffer>
    <experiments>3</experiments>
</comment>
<comment type="interaction">
    <interactant intactId="EBI-1164361">
        <id>Q99497</id>
    </interactant>
    <interactant intactId="EBI-11141397">
        <id>Q9UBQ0-2</id>
        <label>VPS29</label>
    </interactant>
    <organismsDiffer>false</organismsDiffer>
    <experiments>3</experiments>
</comment>
<comment type="subcellular location">
    <subcellularLocation>
        <location evidence="2">Cell membrane</location>
        <topology evidence="2">Lipid-anchor</topology>
    </subcellularLocation>
    <subcellularLocation>
        <location evidence="7 11 23 32 45">Cytoplasm</location>
    </subcellularLocation>
    <subcellularLocation>
        <location evidence="7 11 23 25 45">Nucleus</location>
    </subcellularLocation>
    <subcellularLocation>
        <location evidence="1">Membrane raft</location>
    </subcellularLocation>
    <subcellularLocation>
        <location evidence="19 30 32 50">Mitochondrion</location>
    </subcellularLocation>
    <subcellularLocation>
        <location evidence="50">Endoplasmic reticulum</location>
    </subcellularLocation>
    <text evidence="14 30">Under normal conditions, located predominantly in the cytoplasm and, to a lesser extent, in the nucleus and mitochondrion. Translocates to the mitochondrion and subsequently to the nucleus in response to oxidative stress and exerts an increased cytoprotective effect against oxidative damage (PubMed:18711745). Detected in tau inclusions in brains from neurodegenerative disease patients (PubMed:14705119). Membrane raft localization in astrocytes and neuronal cells requires palmitoylation.</text>
</comment>
<comment type="tissue specificity">
    <text evidence="11 13 14 37 52">Highly expressed in pancreas, kidney, skeletal muscle, liver, testis and heart. Detected at slightly lower levels in placenta and brain (at protein level). Detected in astrocytes, Sertoli cells, spermatogonia, spermatids and spermatozoa. Expressed by pancreatic islets at higher levels than surrounding exocrine tissues (PubMed:22611253).</text>
</comment>
<comment type="developmental stage">
    <text evidence="37">In pancreatic islets, expression increases during aging.</text>
</comment>
<comment type="induction">
    <text evidence="17 23 37 42">By hydrogen peroxide and UV irradiation (PubMed:14749723, PubMed:15976810). In pancreatic islets, expression increases under hyperglycemic conditions (PubMed:22611253). Expression is also induced by sulforaphane, an isothiocyanate obtained from cruciferous vegetables (PubMed:26995087).</text>
</comment>
<comment type="PTM">
    <text evidence="23">Sumoylated on Lys-130 by PIAS2 or PIAS4; which is enhanced after ultraviolet irradiation and essential for cell-growth promoting activity and transforming activity.</text>
</comment>
<comment type="PTM">
    <text evidence="9 23">Cys-106 is easily oxidized to sulfinic acid.</text>
</comment>
<comment type="PTM">
    <text evidence="34">Undergoes cleavage of a C-terminal peptide and subsequent activation of protease activity in response to oxidative stress.</text>
</comment>
<comment type="disease" evidence="4 7 10 12 16 20 21 24 28 31 32 36 38 39 41 46 49">
    <disease id="DI-01240">
        <name>Parkinson disease 7</name>
        <acronym>PARK7</acronym>
        <description>A neurodegenerative disorder characterized by resting tremor, postural tremor, bradykinesia, muscular rigidity, anxiety and psychotic episodes. PARK7 has onset before 40 years, slow progression and initial good response to levodopa. Some patients may show traits reminiscent of amyotrophic lateral sclerosis-parkinsonism/dementia complex (Guam disease).</description>
        <dbReference type="MIM" id="606324"/>
    </disease>
    <text>The disease is caused by variants affecting the gene represented in this entry.</text>
</comment>
<comment type="similarity">
    <text evidence="55">Belongs to the peptidase C56 family.</text>
</comment>
<comment type="caution">
    <text evidence="36 40 51">Glyoxalase activity has been reported (PubMed:22523093, PubMed:31653696). It may however reflect its deglycase activity (PubMed:25416785).</text>
</comment>
<comment type="caution">
    <text evidence="40 43 44 45 51">The protein deglycation activity is controversial. It has been ascribed to a TRIS buffer artifact by a publication (PubMed:27903648) and as a result of the removal of methylglyoxal by glyoxalase activity that leads to a subsequent decomposition of hemithioacetals and hemianimals due to the shift in equilibrium position by another one (PubMed:31653696). However, biochemical experiments showing that PARK7 is a bona fide deglycase have been performed (PubMed:25416785, PubMed:28013050, PubMed:28596309).</text>
</comment>
<gene>
    <name evidence="59" type="primary">PARK7</name>
</gene>
<sequence length="189" mass="19891">MASKRALVILAKGAEEMETVIPVDVMRRAGIKVTVAGLAGKDPVQCSRDVVICPDASLEDAKKEGPYDVVVLPGGNLGAQNLSESAAVKEILKEQENRKGLIAAICAGPTALLAHEIGFGSKVTTHPLAKDKMMNGGHYTYSENRVEKDGLILTSRGPGTSFEFALAIVEALNGKEVAAQVKAPLVLKD</sequence>
<accession>Q99497</accession>
<accession>B2R4Z1</accession>
<accession>O14805</accession>
<accession>Q6DR95</accession>
<accession>Q7LFU2</accession>
<evidence type="ECO:0000250" key="1">
    <source>
        <dbReference type="UniProtKB" id="O88767"/>
    </source>
</evidence>
<evidence type="ECO:0000250" key="2">
    <source>
        <dbReference type="UniProtKB" id="Q99LX0"/>
    </source>
</evidence>
<evidence type="ECO:0000269" key="3">
    <source>
    </source>
</evidence>
<evidence type="ECO:0000269" key="4">
    <source>
    </source>
</evidence>
<evidence type="ECO:0000269" key="5">
    <source>
    </source>
</evidence>
<evidence type="ECO:0000269" key="6">
    <source>
    </source>
</evidence>
<evidence type="ECO:0000269" key="7">
    <source>
    </source>
</evidence>
<evidence type="ECO:0000269" key="8">
    <source>
    </source>
</evidence>
<evidence type="ECO:0000269" key="9">
    <source>
    </source>
</evidence>
<evidence type="ECO:0000269" key="10">
    <source>
    </source>
</evidence>
<evidence type="ECO:0000269" key="11">
    <source>
    </source>
</evidence>
<evidence type="ECO:0000269" key="12">
    <source>
    </source>
</evidence>
<evidence type="ECO:0000269" key="13">
    <source>
    </source>
</evidence>
<evidence type="ECO:0000269" key="14">
    <source>
    </source>
</evidence>
<evidence type="ECO:0000269" key="15">
    <source>
    </source>
</evidence>
<evidence type="ECO:0000269" key="16">
    <source>
    </source>
</evidence>
<evidence type="ECO:0000269" key="17">
    <source>
    </source>
</evidence>
<evidence type="ECO:0000269" key="18">
    <source>
    </source>
</evidence>
<evidence type="ECO:0000269" key="19">
    <source>
    </source>
</evidence>
<evidence type="ECO:0000269" key="20">
    <source>
    </source>
</evidence>
<evidence type="ECO:0000269" key="21">
    <source>
    </source>
</evidence>
<evidence type="ECO:0000269" key="22">
    <source>
    </source>
</evidence>
<evidence type="ECO:0000269" key="23">
    <source>
    </source>
</evidence>
<evidence type="ECO:0000269" key="24">
    <source>
    </source>
</evidence>
<evidence type="ECO:0000269" key="25">
    <source>
    </source>
</evidence>
<evidence type="ECO:0000269" key="26">
    <source>
    </source>
</evidence>
<evidence type="ECO:0000269" key="27">
    <source>
    </source>
</evidence>
<evidence type="ECO:0000269" key="28">
    <source>
    </source>
</evidence>
<evidence type="ECO:0000269" key="29">
    <source>
    </source>
</evidence>
<evidence type="ECO:0000269" key="30">
    <source>
    </source>
</evidence>
<evidence type="ECO:0000269" key="31">
    <source>
    </source>
</evidence>
<evidence type="ECO:0000269" key="32">
    <source>
    </source>
</evidence>
<evidence type="ECO:0000269" key="33">
    <source>
    </source>
</evidence>
<evidence type="ECO:0000269" key="34">
    <source>
    </source>
</evidence>
<evidence type="ECO:0000269" key="35">
    <source>
    </source>
</evidence>
<evidence type="ECO:0000269" key="36">
    <source>
    </source>
</evidence>
<evidence type="ECO:0000269" key="37">
    <source>
    </source>
</evidence>
<evidence type="ECO:0000269" key="38">
    <source>
    </source>
</evidence>
<evidence type="ECO:0000269" key="39">
    <source>
    </source>
</evidence>
<evidence type="ECO:0000269" key="40">
    <source>
    </source>
</evidence>
<evidence type="ECO:0000269" key="41">
    <source>
    </source>
</evidence>
<evidence type="ECO:0000269" key="42">
    <source>
    </source>
</evidence>
<evidence type="ECO:0000269" key="43">
    <source>
    </source>
</evidence>
<evidence type="ECO:0000269" key="44">
    <source>
    </source>
</evidence>
<evidence type="ECO:0000269" key="45">
    <source>
    </source>
</evidence>
<evidence type="ECO:0000269" key="46">
    <source>
    </source>
</evidence>
<evidence type="ECO:0000269" key="47">
    <source>
    </source>
</evidence>
<evidence type="ECO:0000269" key="48">
    <source>
    </source>
</evidence>
<evidence type="ECO:0000269" key="49">
    <source>
    </source>
</evidence>
<evidence type="ECO:0000269" key="50">
    <source>
    </source>
</evidence>
<evidence type="ECO:0000269" key="51">
    <source>
    </source>
</evidence>
<evidence type="ECO:0000269" key="52">
    <source>
    </source>
</evidence>
<evidence type="ECO:0000269" key="53">
    <source ref="10"/>
</evidence>
<evidence type="ECO:0000303" key="54">
    <source>
    </source>
</evidence>
<evidence type="ECO:0000305" key="55"/>
<evidence type="ECO:0000305" key="56">
    <source>
    </source>
</evidence>
<evidence type="ECO:0000305" key="57">
    <source>
    </source>
</evidence>
<evidence type="ECO:0000305" key="58">
    <source>
    </source>
</evidence>
<evidence type="ECO:0000312" key="59">
    <source>
        <dbReference type="HGNC" id="HGNC:16369"/>
    </source>
</evidence>
<evidence type="ECO:0007744" key="60">
    <source>
    </source>
</evidence>
<evidence type="ECO:0007744" key="61">
    <source>
    </source>
</evidence>
<evidence type="ECO:0007829" key="62">
    <source>
        <dbReference type="PDB" id="1PDW"/>
    </source>
</evidence>
<evidence type="ECO:0007829" key="63">
    <source>
        <dbReference type="PDB" id="2OR3"/>
    </source>
</evidence>
<evidence type="ECO:0007829" key="64">
    <source>
        <dbReference type="PDB" id="2RK3"/>
    </source>
</evidence>
<evidence type="ECO:0007829" key="65">
    <source>
        <dbReference type="PDB" id="4N0M"/>
    </source>
</evidence>
<protein>
    <recommendedName>
        <fullName evidence="55">Parkinson disease protein 7</fullName>
    </recommendedName>
    <alternativeName>
        <fullName evidence="54">Maillard deglycase</fullName>
    </alternativeName>
    <alternativeName>
        <fullName evidence="55">Oncogene DJ1</fullName>
    </alternativeName>
    <alternativeName>
        <fullName evidence="59">Parkinsonism-associated deglycase</fullName>
    </alternativeName>
    <alternativeName>
        <fullName evidence="55">Protein DJ-1</fullName>
        <shortName>DJ-1</shortName>
    </alternativeName>
    <alternativeName>
        <fullName evidence="57 58">Protein/nucleic acid deglycase DJ-1</fullName>
        <ecNumber evidence="40">3.1.2.-</ecNumber>
        <ecNumber evidence="45">3.5.1.-</ecNumber>
        <ecNumber evidence="40">3.5.1.124</ecNumber>
    </alternativeName>
</protein>
<feature type="initiator methionine" description="Removed" evidence="61">
    <location>
        <position position="1"/>
    </location>
</feature>
<feature type="chain" id="PRO_0000157849" description="Parkinson disease protein 7">
    <location>
        <begin position="2"/>
        <end status="unknown"/>
    </location>
</feature>
<feature type="propeptide" id="PRO_0000405558" description="Removed in mature form">
    <location>
        <begin status="unknown"/>
        <end position="189"/>
    </location>
</feature>
<feature type="active site" description="Nucleophile" evidence="56 57">
    <location>
        <position position="106"/>
    </location>
</feature>
<feature type="active site" evidence="56">
    <location>
        <position position="126"/>
    </location>
</feature>
<feature type="site" description="Cleavage; by CASP6" evidence="2">
    <location>
        <begin position="149"/>
        <end position="150"/>
    </location>
</feature>
<feature type="modified residue" description="N-acetylalanine" evidence="61">
    <location>
        <position position="2"/>
    </location>
</feature>
<feature type="modified residue" description="Phosphotyrosine" evidence="60">
    <location>
        <position position="67"/>
    </location>
</feature>
<feature type="modified residue" description="Cysteine sulfinic acid (-SO2H); alternate" evidence="9">
    <location>
        <position position="106"/>
    </location>
</feature>
<feature type="modified residue" description="N6-acetyllysine" evidence="2">
    <location>
        <position position="148"/>
    </location>
</feature>
<feature type="modified residue" description="N6-succinyllysine" evidence="2">
    <location>
        <position position="182"/>
    </location>
</feature>
<feature type="lipid moiety-binding region" description="S-palmitoyl cysteine" evidence="39">
    <location>
        <position position="46"/>
    </location>
</feature>
<feature type="lipid moiety-binding region" description="S-palmitoyl cysteine" evidence="39">
    <location>
        <position position="53"/>
    </location>
</feature>
<feature type="lipid moiety-binding region" description="S-palmitoyl cysteine; alternate" evidence="39">
    <location>
        <position position="106"/>
    </location>
</feature>
<feature type="cross-link" description="Glycyl lysine isopeptide (Lys-Gly) (interchain with G-Cter in SUMO)" evidence="23">
    <location>
        <position position="130"/>
    </location>
</feature>
<feature type="sequence variant" id="VAR_084339" description="In PARK7; uncertain significance." evidence="31">
    <original>L</original>
    <variation>P</variation>
    <location>
        <position position="10"/>
    </location>
</feature>
<feature type="sequence variant" id="VAR_020492" description="In PARK7; does not affect protein stability and degradation; does not interfere with homodimerization; decreased detoxification activity on methylglyocal-adducted CoA; dbSNP:rs74315351." evidence="10 16 46">
    <original>M</original>
    <variation>I</variation>
    <location>
        <position position="26"/>
    </location>
</feature>
<feature type="sequence variant" id="VAR_072589" description="Found in early-onset Parkinson disease with digenic inheritance; likely pathogenic; the patient also carries PINK1 mutation L-399; no effect on detoxification activity on methylglyocal-adducted CoA; dbSNP:rs137853051." evidence="26 46">
    <original>A</original>
    <variation>S</variation>
    <location>
        <position position="39"/>
    </location>
</feature>
<feature type="sequence variant" id="VAR_083277" description="In PARK7." evidence="41">
    <location>
        <position position="45"/>
    </location>
</feature>
<feature type="sequence variant" id="VAR_020493" description="In PARK7; no apparent effect on protein stability; impaired mitochondrial morphology; no effect on detoxification activity on methylglyocal-adducted CoA; dbSNP:rs74315353." evidence="12 21 33 46">
    <original>E</original>
    <variation>D</variation>
    <location>
        <position position="64"/>
    </location>
</feature>
<feature type="sequence variant" id="VAR_020494" description="In dbSNP:rs71653619." evidence="10 15 18 20">
    <original>R</original>
    <variation>Q</variation>
    <location>
        <position position="98"/>
    </location>
</feature>
<feature type="sequence variant" id="VAR_020495" description="In PARK7; loss of protection against metal cytotoxicity; decreased detoxification activity on methylglyocal-adducted CoA; dbSNP:rs774005786." evidence="20 38 46">
    <original>A</original>
    <variation>T</variation>
    <location>
        <position position="104"/>
    </location>
</feature>
<feature type="sequence variant" id="VAR_020496" description="In PARK7; loss of protection against metal cytotoxicity; decreased detoxification activity on methylglyocal-adducted CoA; dbSNP:rs74315352." evidence="10 38 46">
    <original>D</original>
    <variation>A</variation>
    <location>
        <position position="149"/>
    </location>
</feature>
<feature type="sequence variant" id="VAR_020497" description="In dbSNP:rs368420490." evidence="53">
    <original>G</original>
    <variation>S</variation>
    <location>
        <position position="150"/>
    </location>
</feature>
<feature type="sequence variant" id="VAR_034801" description="In PARK7; uncertain significance; no effect on detoxification activity on methylglyocal-adducted CoA; dbSNP:rs74315354." evidence="24 46">
    <original>E</original>
    <variation>K</variation>
    <location>
        <position position="163"/>
    </location>
</feature>
<feature type="sequence variant" id="VAR_020498" description="In PARK7; strongly decreases enzymatic activity; reduces protein stability and leads to increased degradation; ubiquitinated by PRKN leading to its recognition by HDAC6 and targeting to aggresome where is degraded; interferes with homodimerization; abolishes interaction with PIAS2; reduced localization in lipid rafts; almost abolished detoxification activity on methylglyocal-adducted CoA; dbSNP:rs28938172." evidence="4 7 12 16 28 32 36 39 46">
    <original>L</original>
    <variation>P</variation>
    <location>
        <position position="166"/>
    </location>
</feature>
<feature type="sequence variant" id="VAR_020499" description="In dbSNP:rs777026628." evidence="20">
    <original>A</original>
    <variation>S</variation>
    <location>
        <position position="171"/>
    </location>
</feature>
<feature type="mutagenesis site" description="Abolishes detoxification activity on methylglyocal-adducted CoA." evidence="46">
    <original>L</original>
    <variation>P</variation>
    <location>
        <position position="10"/>
    </location>
</feature>
<feature type="mutagenesis site" description="Strongly decreases enzymatic activity. Almost abolishes detoxification activity on methylglyocal-adducted CoA." evidence="36 46">
    <original>E</original>
    <variation>A</variation>
    <location>
        <position position="18"/>
    </location>
</feature>
<feature type="mutagenesis site" description="Strongly decreases enzymatic activity." evidence="36">
    <original>E</original>
    <variation>D</variation>
    <location>
        <position position="18"/>
    </location>
</feature>
<feature type="mutagenesis site" description="Strongly decreases enzymatic activity." evidence="36">
    <original>E</original>
    <variation>N</variation>
    <location>
        <position position="18"/>
    </location>
</feature>
<feature type="mutagenesis site" description="Strongly decreases enzymatic activity." evidence="36">
    <original>E</original>
    <variation>Q</variation>
    <location>
        <position position="18"/>
    </location>
</feature>
<feature type="mutagenesis site" description="Reduces protein stability. No effect on oxidation." evidence="19 22 30 39">
    <original>C</original>
    <variation>A</variation>
    <location>
        <position position="46"/>
    </location>
</feature>
<feature type="mutagenesis site" description="Reduces protein stability. No effect on oxidation. Reduced localization in lipid rafts; when associated with A-106." evidence="19 22 30 39">
    <original>C</original>
    <variation>A</variation>
    <location>
        <position position="46"/>
    </location>
</feature>
<feature type="mutagenesis site" description="No effect on mitochondrial translocation neither on deglycase activity." evidence="19 22 30 39 40">
    <original>C</original>
    <variation>S</variation>
    <location>
        <position position="46"/>
    </location>
</feature>
<feature type="mutagenesis site" description="Disrupts dimer formation and strongly reduces ability to eliminate hydrogen peroxide." evidence="17">
    <original>V</original>
    <variation>A</variation>
    <location>
        <position position="51"/>
    </location>
</feature>
<feature type="mutagenesis site" description="Strongly reduces chaperone activity and ability to eliminate hydrogen peroxide." evidence="17 19 22 30">
    <original>C</original>
    <variation>A</variation>
    <location>
        <position position="53"/>
    </location>
</feature>
<feature type="mutagenesis site" description="No effect on mitochondrial translocation neither on deglycase activity." evidence="17 19 22 30 40">
    <original>C</original>
    <variation>S</variation>
    <location>
        <position position="53"/>
    </location>
</feature>
<feature type="mutagenesis site" description="Abolishes enzymatic activity. Abolishes oxidation, association with mitochondria and protease activity. No effect on chaperone activity. Reduces binding to OTUD7B." evidence="19 22 25 30 34 35 36 39">
    <original>C</original>
    <variation>A</variation>
    <location>
        <position position="106"/>
    </location>
</feature>
<feature type="mutagenesis site" description="Abolishes enzymatic activity. Abolishes oxidation, association with mitochondria and protease activity. No effect on chaperone activity. Reduces binding to OTUD7B. Removes the glycations and restores histone 3. Reduced localization in lipid rafts; when associated with A-46." evidence="19 22 25 30 34 35 36 39 48">
    <original>C</original>
    <variation>A</variation>
    <location>
        <position position="106"/>
    </location>
</feature>
<feature type="mutagenesis site" description="Abolishes oxidation and association with mitochondria. No effect on chaperone activity." evidence="19 22 25 30 34 35 39">
    <original>C</original>
    <variation>D</variation>
    <location>
        <position position="106"/>
    </location>
</feature>
<feature type="mutagenesis site" description="Loss of protein and nucleic acid deglycase activity. No effect on mitochondrial translocation. Reduced protease activity. No effect on protection against metal cytotoxicity. No effect on methylglyoxal-adducted glutathione or CoA." evidence="19 22 25 30 34 35 39 40 45 46">
    <original>C</original>
    <variation>S</variation>
    <location>
        <position position="106"/>
    </location>
</feature>
<feature type="mutagenesis site" description="Strongly decreases enzymatic activity." evidence="34 36">
    <original>H</original>
    <variation>A</variation>
    <location>
        <position position="126"/>
    </location>
</feature>
<feature type="mutagenesis site" description="Partially compensates for loss of stability; when associated with P-166." evidence="7">
    <original>K</original>
    <variation>R</variation>
    <location>
        <position position="130"/>
    </location>
</feature>
<feature type="mutagenesis site" description="No effect on detoxification activity on methylglyocal-adducted CoA." evidence="46">
    <original>A</original>
    <variation>T</variation>
    <location>
        <position position="179"/>
    </location>
</feature>
<feature type="sequence conflict" description="In Ref. 3; BAB71782." evidence="55" ref="3">
    <original>F</original>
    <variation>C</variation>
    <location>
        <position position="119"/>
    </location>
</feature>
<feature type="strand" evidence="64">
    <location>
        <begin position="5"/>
        <end position="10"/>
    </location>
</feature>
<feature type="helix" evidence="64">
    <location>
        <begin position="16"/>
        <end position="28"/>
    </location>
</feature>
<feature type="strand" evidence="64">
    <location>
        <begin position="32"/>
        <end position="37"/>
    </location>
</feature>
<feature type="turn" evidence="62">
    <location>
        <begin position="38"/>
        <end position="41"/>
    </location>
</feature>
<feature type="strand" evidence="65">
    <location>
        <begin position="47"/>
        <end position="49"/>
    </location>
</feature>
<feature type="strand" evidence="63">
    <location>
        <begin position="51"/>
        <end position="53"/>
    </location>
</feature>
<feature type="strand" evidence="64">
    <location>
        <begin position="55"/>
        <end position="57"/>
    </location>
</feature>
<feature type="helix" evidence="64">
    <location>
        <begin position="58"/>
        <end position="62"/>
    </location>
</feature>
<feature type="strand" evidence="64">
    <location>
        <begin position="68"/>
        <end position="72"/>
    </location>
</feature>
<feature type="helix" evidence="64">
    <location>
        <begin position="76"/>
        <end position="84"/>
    </location>
</feature>
<feature type="helix" evidence="64">
    <location>
        <begin position="86"/>
        <end position="97"/>
    </location>
</feature>
<feature type="strand" evidence="64">
    <location>
        <begin position="101"/>
        <end position="105"/>
    </location>
</feature>
<feature type="turn" evidence="64">
    <location>
        <begin position="106"/>
        <end position="108"/>
    </location>
</feature>
<feature type="helix" evidence="64">
    <location>
        <begin position="109"/>
        <end position="114"/>
    </location>
</feature>
<feature type="helix" evidence="64">
    <location>
        <begin position="127"/>
        <end position="129"/>
    </location>
</feature>
<feature type="helix" evidence="64">
    <location>
        <begin position="130"/>
        <end position="133"/>
    </location>
</feature>
<feature type="turn" evidence="64">
    <location>
        <begin position="134"/>
        <end position="136"/>
    </location>
</feature>
<feature type="strand" evidence="64">
    <location>
        <begin position="139"/>
        <end position="141"/>
    </location>
</feature>
<feature type="strand" evidence="64">
    <location>
        <begin position="145"/>
        <end position="149"/>
    </location>
</feature>
<feature type="strand" evidence="64">
    <location>
        <begin position="152"/>
        <end position="155"/>
    </location>
</feature>
<feature type="helix" evidence="64">
    <location>
        <begin position="158"/>
        <end position="160"/>
    </location>
</feature>
<feature type="helix" evidence="64">
    <location>
        <begin position="161"/>
        <end position="173"/>
    </location>
</feature>
<feature type="helix" evidence="64">
    <location>
        <begin position="175"/>
        <end position="182"/>
    </location>
</feature>
<feature type="helix" evidence="64">
    <location>
        <begin position="183"/>
        <end position="185"/>
    </location>
</feature>
<name>PARK7_HUMAN</name>
<organism>
    <name type="scientific">Homo sapiens</name>
    <name type="common">Human</name>
    <dbReference type="NCBI Taxonomy" id="9606"/>
    <lineage>
        <taxon>Eukaryota</taxon>
        <taxon>Metazoa</taxon>
        <taxon>Chordata</taxon>
        <taxon>Craniata</taxon>
        <taxon>Vertebrata</taxon>
        <taxon>Euteleostomi</taxon>
        <taxon>Mammalia</taxon>
        <taxon>Eutheria</taxon>
        <taxon>Euarchontoglires</taxon>
        <taxon>Primates</taxon>
        <taxon>Haplorrhini</taxon>
        <taxon>Catarrhini</taxon>
        <taxon>Hominidae</taxon>
        <taxon>Homo</taxon>
    </lineage>
</organism>
<dbReference type="EC" id="3.1.2.-" evidence="40"/>
<dbReference type="EC" id="3.5.1.-" evidence="45"/>
<dbReference type="EC" id="3.5.1.124" evidence="40"/>
<dbReference type="EMBL" id="D61380">
    <property type="protein sequence ID" value="BAA09603.2"/>
    <property type="molecule type" value="mRNA"/>
</dbReference>
<dbReference type="EMBL" id="AF021819">
    <property type="protein sequence ID" value="AAC12806.1"/>
    <property type="molecule type" value="mRNA"/>
</dbReference>
<dbReference type="EMBL" id="AB073864">
    <property type="protein sequence ID" value="BAB71782.1"/>
    <property type="molecule type" value="mRNA"/>
</dbReference>
<dbReference type="EMBL" id="AK312000">
    <property type="protein sequence ID" value="BAG34938.1"/>
    <property type="molecule type" value="mRNA"/>
</dbReference>
<dbReference type="EMBL" id="AL034417">
    <property type="status" value="NOT_ANNOTATED_CDS"/>
    <property type="molecule type" value="Genomic_DNA"/>
</dbReference>
<dbReference type="EMBL" id="CH471130">
    <property type="protein sequence ID" value="EAW71591.1"/>
    <property type="molecule type" value="Genomic_DNA"/>
</dbReference>
<dbReference type="EMBL" id="BC008188">
    <property type="protein sequence ID" value="AAH08188.1"/>
    <property type="molecule type" value="mRNA"/>
</dbReference>
<dbReference type="EMBL" id="AB045294">
    <property type="status" value="NOT_ANNOTATED_CDS"/>
    <property type="molecule type" value="Genomic_DNA"/>
</dbReference>
<dbReference type="EMBL" id="AY648999">
    <property type="protein sequence ID" value="AAT68961.1"/>
    <property type="molecule type" value="Genomic_DNA"/>
</dbReference>
<dbReference type="CCDS" id="CCDS93.1"/>
<dbReference type="PIR" id="JC5394">
    <property type="entry name" value="JC5394"/>
</dbReference>
<dbReference type="RefSeq" id="NP_001116849.1">
    <property type="nucleotide sequence ID" value="NM_001123377.2"/>
</dbReference>
<dbReference type="RefSeq" id="NP_009193.2">
    <property type="nucleotide sequence ID" value="NM_007262.4"/>
</dbReference>
<dbReference type="RefSeq" id="XP_005263481.1">
    <property type="nucleotide sequence ID" value="XM_005263424.4"/>
</dbReference>
<dbReference type="RefSeq" id="XP_054190021.1">
    <property type="nucleotide sequence ID" value="XM_054334046.1"/>
</dbReference>
<dbReference type="PDB" id="1J42">
    <property type="method" value="X-ray"/>
    <property type="resolution" value="2.50 A"/>
    <property type="chains" value="A=1-189"/>
</dbReference>
<dbReference type="PDB" id="1P5F">
    <property type="method" value="X-ray"/>
    <property type="resolution" value="1.10 A"/>
    <property type="chains" value="A=1-189"/>
</dbReference>
<dbReference type="PDB" id="1PDV">
    <property type="method" value="X-ray"/>
    <property type="resolution" value="1.80 A"/>
    <property type="chains" value="A=1-189"/>
</dbReference>
<dbReference type="PDB" id="1PDW">
    <property type="method" value="X-ray"/>
    <property type="resolution" value="2.20 A"/>
    <property type="chains" value="A/B/C/D/E/F/G/H=1-189"/>
</dbReference>
<dbReference type="PDB" id="1PE0">
    <property type="method" value="X-ray"/>
    <property type="resolution" value="1.70 A"/>
    <property type="chains" value="A/B=1-189"/>
</dbReference>
<dbReference type="PDB" id="1Q2U">
    <property type="method" value="X-ray"/>
    <property type="resolution" value="1.60 A"/>
    <property type="chains" value="A=1-189"/>
</dbReference>
<dbReference type="PDB" id="1SOA">
    <property type="method" value="X-ray"/>
    <property type="resolution" value="1.20 A"/>
    <property type="chains" value="A=1-189"/>
</dbReference>
<dbReference type="PDB" id="1UCF">
    <property type="method" value="X-ray"/>
    <property type="resolution" value="1.95 A"/>
    <property type="chains" value="A/B=1-189"/>
</dbReference>
<dbReference type="PDB" id="2OR3">
    <property type="method" value="X-ray"/>
    <property type="resolution" value="1.20 A"/>
    <property type="chains" value="A/B=1-189"/>
</dbReference>
<dbReference type="PDB" id="2R1T">
    <property type="method" value="X-ray"/>
    <property type="resolution" value="1.70 A"/>
    <property type="chains" value="A/B=2-188"/>
</dbReference>
<dbReference type="PDB" id="2R1U">
    <property type="method" value="X-ray"/>
    <property type="resolution" value="1.50 A"/>
    <property type="chains" value="A/B=2-188"/>
</dbReference>
<dbReference type="PDB" id="2R1V">
    <property type="method" value="X-ray"/>
    <property type="resolution" value="1.70 A"/>
    <property type="chains" value="A/B=2-188"/>
</dbReference>
<dbReference type="PDB" id="2RK3">
    <property type="method" value="X-ray"/>
    <property type="resolution" value="1.05 A"/>
    <property type="chains" value="A=1-189"/>
</dbReference>
<dbReference type="PDB" id="2RK4">
    <property type="method" value="X-ray"/>
    <property type="resolution" value="1.15 A"/>
    <property type="chains" value="A=1-189"/>
</dbReference>
<dbReference type="PDB" id="2RK6">
    <property type="method" value="X-ray"/>
    <property type="resolution" value="1.15 A"/>
    <property type="chains" value="A=1-189"/>
</dbReference>
<dbReference type="PDB" id="3B36">
    <property type="method" value="X-ray"/>
    <property type="resolution" value="1.50 A"/>
    <property type="chains" value="A=1-189"/>
</dbReference>
<dbReference type="PDB" id="3B38">
    <property type="method" value="X-ray"/>
    <property type="resolution" value="1.85 A"/>
    <property type="chains" value="A=1-189"/>
</dbReference>
<dbReference type="PDB" id="3B3A">
    <property type="method" value="X-ray"/>
    <property type="resolution" value="1.50 A"/>
    <property type="chains" value="A=1-189"/>
</dbReference>
<dbReference type="PDB" id="3BWE">
    <property type="method" value="X-ray"/>
    <property type="resolution" value="2.40 A"/>
    <property type="chains" value="A/B/C/D/E/F/G=1-189"/>
</dbReference>
<dbReference type="PDB" id="3CY6">
    <property type="method" value="X-ray"/>
    <property type="resolution" value="1.35 A"/>
    <property type="chains" value="A=1-189"/>
</dbReference>
<dbReference type="PDB" id="3CYF">
    <property type="method" value="X-ray"/>
    <property type="resolution" value="1.60 A"/>
    <property type="chains" value="A=1-189"/>
</dbReference>
<dbReference type="PDB" id="3CZ9">
    <property type="method" value="X-ray"/>
    <property type="resolution" value="1.15 A"/>
    <property type="chains" value="A=1-189"/>
</dbReference>
<dbReference type="PDB" id="3CZA">
    <property type="method" value="X-ray"/>
    <property type="resolution" value="1.20 A"/>
    <property type="chains" value="A=1-189"/>
</dbReference>
<dbReference type="PDB" id="3EZG">
    <property type="method" value="X-ray"/>
    <property type="resolution" value="1.15 A"/>
    <property type="chains" value="A=1-189"/>
</dbReference>
<dbReference type="PDB" id="3F71">
    <property type="method" value="X-ray"/>
    <property type="resolution" value="1.20 A"/>
    <property type="chains" value="A=1-189"/>
</dbReference>
<dbReference type="PDB" id="3SF8">
    <property type="method" value="X-ray"/>
    <property type="resolution" value="1.56 A"/>
    <property type="chains" value="A/B=1-189"/>
</dbReference>
<dbReference type="PDB" id="4BTE">
    <property type="method" value="X-ray"/>
    <property type="resolution" value="1.38 A"/>
    <property type="chains" value="A=1-189"/>
</dbReference>
<dbReference type="PDB" id="4MNT">
    <property type="method" value="X-ray"/>
    <property type="resolution" value="1.58 A"/>
    <property type="chains" value="A=1-189"/>
</dbReference>
<dbReference type="PDB" id="4MTC">
    <property type="method" value="X-ray"/>
    <property type="resolution" value="1.47 A"/>
    <property type="chains" value="A=1-189"/>
</dbReference>
<dbReference type="PDB" id="4N0M">
    <property type="method" value="X-ray"/>
    <property type="resolution" value="1.95 A"/>
    <property type="chains" value="A=1-189"/>
</dbReference>
<dbReference type="PDB" id="4N12">
    <property type="method" value="X-ray"/>
    <property type="resolution" value="1.48 A"/>
    <property type="chains" value="A=1-189"/>
</dbReference>
<dbReference type="PDB" id="4OGF">
    <property type="method" value="X-ray"/>
    <property type="resolution" value="1.60 A"/>
    <property type="chains" value="A=2-188"/>
</dbReference>
<dbReference type="PDB" id="4OQ4">
    <property type="method" value="X-ray"/>
    <property type="resolution" value="1.49 A"/>
    <property type="chains" value="A=1-189"/>
</dbReference>
<dbReference type="PDB" id="4P2G">
    <property type="method" value="X-ray"/>
    <property type="resolution" value="1.35 A"/>
    <property type="chains" value="A=1-189"/>
</dbReference>
<dbReference type="PDB" id="4P34">
    <property type="method" value="X-ray"/>
    <property type="resolution" value="1.55 A"/>
    <property type="chains" value="A=1-189"/>
</dbReference>
<dbReference type="PDB" id="4P35">
    <property type="method" value="X-ray"/>
    <property type="resolution" value="1.75 A"/>
    <property type="chains" value="A=1-189"/>
</dbReference>
<dbReference type="PDB" id="4P36">
    <property type="method" value="X-ray"/>
    <property type="resolution" value="1.18 A"/>
    <property type="chains" value="A=1-189"/>
</dbReference>
<dbReference type="PDB" id="4RKW">
    <property type="method" value="X-ray"/>
    <property type="resolution" value="1.50 A"/>
    <property type="chains" value="A=1-189"/>
</dbReference>
<dbReference type="PDB" id="4RKY">
    <property type="method" value="X-ray"/>
    <property type="resolution" value="1.50 A"/>
    <property type="chains" value="A=1-189"/>
</dbReference>
<dbReference type="PDB" id="4S0Z">
    <property type="method" value="X-ray"/>
    <property type="resolution" value="1.45 A"/>
    <property type="chains" value="A=1-189"/>
</dbReference>
<dbReference type="PDB" id="4ZGG">
    <property type="method" value="X-ray"/>
    <property type="resolution" value="1.23 A"/>
    <property type="chains" value="A=1-189"/>
</dbReference>
<dbReference type="PDB" id="5IP5">
    <property type="method" value="X-ray"/>
    <property type="resolution" value="1.66 A"/>
    <property type="chains" value="A=1-189"/>
</dbReference>
<dbReference type="PDB" id="5SY6">
    <property type="method" value="X-ray"/>
    <property type="resolution" value="1.15 A"/>
    <property type="chains" value="A=1-189"/>
</dbReference>
<dbReference type="PDB" id="5SY9">
    <property type="method" value="X-ray"/>
    <property type="resolution" value="1.10 A"/>
    <property type="chains" value="A=1-189"/>
</dbReference>
<dbReference type="PDB" id="5SYA">
    <property type="method" value="X-ray"/>
    <property type="resolution" value="1.10 A"/>
    <property type="chains" value="A=1-189"/>
</dbReference>
<dbReference type="PDB" id="6AF5">
    <property type="method" value="X-ray"/>
    <property type="resolution" value="1.65 A"/>
    <property type="chains" value="A=1-189"/>
</dbReference>
<dbReference type="PDB" id="6AF7">
    <property type="method" value="X-ray"/>
    <property type="resolution" value="1.30 A"/>
    <property type="chains" value="A=1-189"/>
</dbReference>
<dbReference type="PDB" id="6AF9">
    <property type="method" value="X-ray"/>
    <property type="resolution" value="1.39 A"/>
    <property type="chains" value="A=1-189"/>
</dbReference>
<dbReference type="PDB" id="6AFA">
    <property type="method" value="X-ray"/>
    <property type="resolution" value="1.65 A"/>
    <property type="chains" value="A=1-189"/>
</dbReference>
<dbReference type="PDB" id="6AFB">
    <property type="method" value="X-ray"/>
    <property type="resolution" value="1.60 A"/>
    <property type="chains" value="A=1-189"/>
</dbReference>
<dbReference type="PDB" id="6AFC">
    <property type="method" value="X-ray"/>
    <property type="resolution" value="1.45 A"/>
    <property type="chains" value="A=1-189"/>
</dbReference>
<dbReference type="PDB" id="6AFD">
    <property type="method" value="X-ray"/>
    <property type="resolution" value="1.48 A"/>
    <property type="chains" value="A=1-189"/>
</dbReference>
<dbReference type="PDB" id="6AFE">
    <property type="method" value="X-ray"/>
    <property type="resolution" value="1.50 A"/>
    <property type="chains" value="A=1-189"/>
</dbReference>
<dbReference type="PDB" id="6AFF">
    <property type="method" value="X-ray"/>
    <property type="resolution" value="1.60 A"/>
    <property type="chains" value="A=1-189"/>
</dbReference>
<dbReference type="PDB" id="6AFG">
    <property type="method" value="X-ray"/>
    <property type="resolution" value="1.50 A"/>
    <property type="chains" value="A=1-189"/>
</dbReference>
<dbReference type="PDB" id="6AFH">
    <property type="method" value="X-ray"/>
    <property type="resolution" value="1.65 A"/>
    <property type="chains" value="A=1-189"/>
</dbReference>
<dbReference type="PDB" id="6AFI">
    <property type="method" value="X-ray"/>
    <property type="resolution" value="1.65 A"/>
    <property type="chains" value="A=1-189"/>
</dbReference>
<dbReference type="PDB" id="6AFJ">
    <property type="method" value="X-ray"/>
    <property type="resolution" value="1.48 A"/>
    <property type="chains" value="A=1-189"/>
</dbReference>
<dbReference type="PDB" id="6AFL">
    <property type="method" value="X-ray"/>
    <property type="resolution" value="1.60 A"/>
    <property type="chains" value="A=1-189"/>
</dbReference>
<dbReference type="PDB" id="6E5Z">
    <property type="method" value="X-ray"/>
    <property type="resolution" value="1.35 A"/>
    <property type="chains" value="A=1-189"/>
</dbReference>
<dbReference type="PDB" id="6M8Z">
    <property type="method" value="X-ray"/>
    <property type="resolution" value="1.83 A"/>
    <property type="chains" value="A=1-189"/>
</dbReference>
<dbReference type="PDB" id="7C62">
    <property type="method" value="X-ray"/>
    <property type="resolution" value="2.03 A"/>
    <property type="chains" value="A=1-189"/>
</dbReference>
<dbReference type="PDB" id="7PA2">
    <property type="method" value="X-ray"/>
    <property type="resolution" value="1.21 A"/>
    <property type="chains" value="AAA=1-189"/>
</dbReference>
<dbReference type="PDB" id="7PA3">
    <property type="method" value="X-ray"/>
    <property type="resolution" value="1.42 A"/>
    <property type="chains" value="AAA=1-189"/>
</dbReference>
<dbReference type="PDB" id="8PPW">
    <property type="method" value="X-ray"/>
    <property type="resolution" value="1.53 A"/>
    <property type="chains" value="A=1-189"/>
</dbReference>
<dbReference type="PDB" id="8PQ0">
    <property type="method" value="X-ray"/>
    <property type="resolution" value="1.48 A"/>
    <property type="chains" value="A=1-189"/>
</dbReference>
<dbReference type="PDB" id="9CEI">
    <property type="method" value="X-ray"/>
    <property type="resolution" value="1.77 A"/>
    <property type="chains" value="A=1-189"/>
</dbReference>
<dbReference type="PDB" id="9CFI">
    <property type="method" value="X-ray"/>
    <property type="resolution" value="1.77 A"/>
    <property type="chains" value="A=1-189"/>
</dbReference>
<dbReference type="PDB" id="9CFM">
    <property type="method" value="X-ray"/>
    <property type="resolution" value="1.77 A"/>
    <property type="chains" value="A=1-189"/>
</dbReference>
<dbReference type="PDB" id="9CFO">
    <property type="method" value="X-ray"/>
    <property type="resolution" value="1.77 A"/>
    <property type="chains" value="A=1-189"/>
</dbReference>
<dbReference type="PDB" id="9CFQ">
    <property type="method" value="X-ray"/>
    <property type="resolution" value="1.90 A"/>
    <property type="chains" value="A=1-189"/>
</dbReference>
<dbReference type="PDB" id="9CFY">
    <property type="method" value="X-ray"/>
    <property type="resolution" value="1.77 A"/>
    <property type="chains" value="A=1-189"/>
</dbReference>
<dbReference type="PDB" id="9CFZ">
    <property type="method" value="X-ray"/>
    <property type="resolution" value="1.77 A"/>
    <property type="chains" value="A=1-189"/>
</dbReference>
<dbReference type="PDB" id="9CG0">
    <property type="method" value="X-ray"/>
    <property type="resolution" value="1.77 A"/>
    <property type="chains" value="A=1-189"/>
</dbReference>
<dbReference type="PDB" id="9CGA">
    <property type="method" value="X-ray"/>
    <property type="resolution" value="2.01 A"/>
    <property type="chains" value="A=1-189"/>
</dbReference>
<dbReference type="PDB" id="9CGB">
    <property type="method" value="X-ray"/>
    <property type="resolution" value="2.01 A"/>
    <property type="chains" value="A=1-189"/>
</dbReference>
<dbReference type="PDB" id="9CGD">
    <property type="method" value="X-ray"/>
    <property type="resolution" value="1.97 A"/>
    <property type="chains" value="A=1-189"/>
</dbReference>
<dbReference type="PDB" id="9CGE">
    <property type="method" value="X-ray"/>
    <property type="resolution" value="1.90 A"/>
    <property type="chains" value="A=1-189"/>
</dbReference>
<dbReference type="PDB" id="9CGF">
    <property type="method" value="X-ray"/>
    <property type="resolution" value="2.06 A"/>
    <property type="chains" value="A=1-189"/>
</dbReference>
<dbReference type="PDB" id="9CGG">
    <property type="method" value="X-ray"/>
    <property type="resolution" value="2.01 A"/>
    <property type="chains" value="A=1-189"/>
</dbReference>
<dbReference type="PDB" id="9CMX">
    <property type="method" value="X-ray"/>
    <property type="resolution" value="1.63 A"/>
    <property type="chains" value="A=1-189"/>
</dbReference>
<dbReference type="PDB" id="9CMY">
    <property type="method" value="X-ray"/>
    <property type="resolution" value="1.69 A"/>
    <property type="chains" value="A=1-189"/>
</dbReference>
<dbReference type="PDBsum" id="1J42"/>
<dbReference type="PDBsum" id="1P5F"/>
<dbReference type="PDBsum" id="1PDV"/>
<dbReference type="PDBsum" id="1PDW"/>
<dbReference type="PDBsum" id="1PE0"/>
<dbReference type="PDBsum" id="1Q2U"/>
<dbReference type="PDBsum" id="1SOA"/>
<dbReference type="PDBsum" id="1UCF"/>
<dbReference type="PDBsum" id="2OR3"/>
<dbReference type="PDBsum" id="2R1T"/>
<dbReference type="PDBsum" id="2R1U"/>
<dbReference type="PDBsum" id="2R1V"/>
<dbReference type="PDBsum" id="2RK3"/>
<dbReference type="PDBsum" id="2RK4"/>
<dbReference type="PDBsum" id="2RK6"/>
<dbReference type="PDBsum" id="3B36"/>
<dbReference type="PDBsum" id="3B38"/>
<dbReference type="PDBsum" id="3B3A"/>
<dbReference type="PDBsum" id="3BWE"/>
<dbReference type="PDBsum" id="3CY6"/>
<dbReference type="PDBsum" id="3CYF"/>
<dbReference type="PDBsum" id="3CZ9"/>
<dbReference type="PDBsum" id="3CZA"/>
<dbReference type="PDBsum" id="3EZG"/>
<dbReference type="PDBsum" id="3F71"/>
<dbReference type="PDBsum" id="3SF8"/>
<dbReference type="PDBsum" id="4BTE"/>
<dbReference type="PDBsum" id="4MNT"/>
<dbReference type="PDBsum" id="4MTC"/>
<dbReference type="PDBsum" id="4N0M"/>
<dbReference type="PDBsum" id="4N12"/>
<dbReference type="PDBsum" id="4OGF"/>
<dbReference type="PDBsum" id="4OQ4"/>
<dbReference type="PDBsum" id="4P2G"/>
<dbReference type="PDBsum" id="4P34"/>
<dbReference type="PDBsum" id="4P35"/>
<dbReference type="PDBsum" id="4P36"/>
<dbReference type="PDBsum" id="4RKW"/>
<dbReference type="PDBsum" id="4RKY"/>
<dbReference type="PDBsum" id="4S0Z"/>
<dbReference type="PDBsum" id="4ZGG"/>
<dbReference type="PDBsum" id="5IP5"/>
<dbReference type="PDBsum" id="5SY6"/>
<dbReference type="PDBsum" id="5SY9"/>
<dbReference type="PDBsum" id="5SYA"/>
<dbReference type="PDBsum" id="6AF5"/>
<dbReference type="PDBsum" id="6AF7"/>
<dbReference type="PDBsum" id="6AF9"/>
<dbReference type="PDBsum" id="6AFA"/>
<dbReference type="PDBsum" id="6AFB"/>
<dbReference type="PDBsum" id="6AFC"/>
<dbReference type="PDBsum" id="6AFD"/>
<dbReference type="PDBsum" id="6AFE"/>
<dbReference type="PDBsum" id="6AFF"/>
<dbReference type="PDBsum" id="6AFG"/>
<dbReference type="PDBsum" id="6AFH"/>
<dbReference type="PDBsum" id="6AFI"/>
<dbReference type="PDBsum" id="6AFJ"/>
<dbReference type="PDBsum" id="6AFL"/>
<dbReference type="PDBsum" id="6E5Z"/>
<dbReference type="PDBsum" id="6M8Z"/>
<dbReference type="PDBsum" id="7C62"/>
<dbReference type="PDBsum" id="7PA2"/>
<dbReference type="PDBsum" id="7PA3"/>
<dbReference type="PDBsum" id="8PPW"/>
<dbReference type="PDBsum" id="8PQ0"/>
<dbReference type="PDBsum" id="9CEI"/>
<dbReference type="PDBsum" id="9CFI"/>
<dbReference type="PDBsum" id="9CFM"/>
<dbReference type="PDBsum" id="9CFO"/>
<dbReference type="PDBsum" id="9CFQ"/>
<dbReference type="PDBsum" id="9CFY"/>
<dbReference type="PDBsum" id="9CFZ"/>
<dbReference type="PDBsum" id="9CG0"/>
<dbReference type="PDBsum" id="9CGA"/>
<dbReference type="PDBsum" id="9CGB"/>
<dbReference type="PDBsum" id="9CGD"/>
<dbReference type="PDBsum" id="9CGE"/>
<dbReference type="PDBsum" id="9CGF"/>
<dbReference type="PDBsum" id="9CGG"/>
<dbReference type="PDBsum" id="9CMX"/>
<dbReference type="PDBsum" id="9CMY"/>
<dbReference type="BMRB" id="Q99497"/>
<dbReference type="SMR" id="Q99497"/>
<dbReference type="BioGRID" id="116446">
    <property type="interactions" value="353"/>
</dbReference>
<dbReference type="CORUM" id="Q99497"/>
<dbReference type="DIP" id="DIP-35515N"/>
<dbReference type="FunCoup" id="Q99497">
    <property type="interactions" value="1472"/>
</dbReference>
<dbReference type="IntAct" id="Q99497">
    <property type="interactions" value="163"/>
</dbReference>
<dbReference type="MINT" id="Q99497"/>
<dbReference type="STRING" id="9606.ENSP00000340278"/>
<dbReference type="BindingDB" id="Q99497"/>
<dbReference type="ChEMBL" id="CHEMBL5169188"/>
<dbReference type="DrugBank" id="DB09130">
    <property type="generic name" value="Copper"/>
</dbReference>
<dbReference type="MEROPS" id="C56.002"/>
<dbReference type="GlyGen" id="Q99497">
    <property type="glycosylation" value="1 site, 1 O-linked glycan (1 site)"/>
</dbReference>
<dbReference type="iPTMnet" id="Q99497"/>
<dbReference type="MetOSite" id="Q99497"/>
<dbReference type="PhosphoSitePlus" id="Q99497"/>
<dbReference type="SwissPalm" id="Q99497"/>
<dbReference type="BioMuta" id="PARK7"/>
<dbReference type="DMDM" id="56404943"/>
<dbReference type="OGP" id="Q99497"/>
<dbReference type="REPRODUCTION-2DPAGE" id="IPI00298547"/>
<dbReference type="jPOST" id="Q99497"/>
<dbReference type="MassIVE" id="Q99497"/>
<dbReference type="PaxDb" id="9606-ENSP00000418770"/>
<dbReference type="PeptideAtlas" id="Q99497"/>
<dbReference type="ProteomicsDB" id="78298"/>
<dbReference type="Pumba" id="Q99497"/>
<dbReference type="TopDownProteomics" id="Q99497"/>
<dbReference type="Antibodypedia" id="1372">
    <property type="antibodies" value="899 antibodies from 51 providers"/>
</dbReference>
<dbReference type="DNASU" id="11315"/>
<dbReference type="Ensembl" id="ENST00000338639.10">
    <property type="protein sequence ID" value="ENSP00000340278.5"/>
    <property type="gene ID" value="ENSG00000116288.13"/>
</dbReference>
<dbReference type="Ensembl" id="ENST00000377488.5">
    <property type="protein sequence ID" value="ENSP00000366708.1"/>
    <property type="gene ID" value="ENSG00000116288.13"/>
</dbReference>
<dbReference type="Ensembl" id="ENST00000377491.5">
    <property type="protein sequence ID" value="ENSP00000366711.1"/>
    <property type="gene ID" value="ENSG00000116288.13"/>
</dbReference>
<dbReference type="Ensembl" id="ENST00000493373.5">
    <property type="protein sequence ID" value="ENSP00000465404.1"/>
    <property type="gene ID" value="ENSG00000116288.13"/>
</dbReference>
<dbReference type="Ensembl" id="ENST00000493678.5">
    <property type="protein sequence ID" value="ENSP00000418770.1"/>
    <property type="gene ID" value="ENSG00000116288.13"/>
</dbReference>
<dbReference type="GeneID" id="11315"/>
<dbReference type="KEGG" id="hsa:11315"/>
<dbReference type="MANE-Select" id="ENST00000338639.10">
    <property type="protein sequence ID" value="ENSP00000340278.5"/>
    <property type="RefSeq nucleotide sequence ID" value="NM_007262.5"/>
    <property type="RefSeq protein sequence ID" value="NP_009193.2"/>
</dbReference>
<dbReference type="AGR" id="HGNC:16369"/>
<dbReference type="CTD" id="11315"/>
<dbReference type="DisGeNET" id="11315"/>
<dbReference type="GeneCards" id="PARK7"/>
<dbReference type="GeneReviews" id="PARK7"/>
<dbReference type="HGNC" id="HGNC:16369">
    <property type="gene designation" value="PARK7"/>
</dbReference>
<dbReference type="HPA" id="ENSG00000116288">
    <property type="expression patterns" value="Low tissue specificity"/>
</dbReference>
<dbReference type="MalaCards" id="PARK7"/>
<dbReference type="MIM" id="168600">
    <property type="type" value="phenotype"/>
</dbReference>
<dbReference type="MIM" id="602533">
    <property type="type" value="gene"/>
</dbReference>
<dbReference type="MIM" id="606324">
    <property type="type" value="phenotype"/>
</dbReference>
<dbReference type="neXtProt" id="NX_Q99497"/>
<dbReference type="OpenTargets" id="ENSG00000116288"/>
<dbReference type="Orphanet" id="90020">
    <property type="disease" value="Parkinson-dementia complex of Guam"/>
</dbReference>
<dbReference type="Orphanet" id="2828">
    <property type="disease" value="Young-onset Parkinson disease"/>
</dbReference>
<dbReference type="PharmGKB" id="PA32946"/>
<dbReference type="VEuPathDB" id="HostDB:ENSG00000116288"/>
<dbReference type="eggNOG" id="KOG2764">
    <property type="taxonomic scope" value="Eukaryota"/>
</dbReference>
<dbReference type="GeneTree" id="ENSGT00390000001231"/>
<dbReference type="HOGENOM" id="CLU_000445_44_2_1"/>
<dbReference type="InParanoid" id="Q99497"/>
<dbReference type="OMA" id="KATCYPG"/>
<dbReference type="OrthoDB" id="543156at2759"/>
<dbReference type="PAN-GO" id="Q99497">
    <property type="GO annotations" value="8 GO annotations based on evolutionary models"/>
</dbReference>
<dbReference type="PhylomeDB" id="Q99497"/>
<dbReference type="TreeFam" id="TF300119"/>
<dbReference type="BioCyc" id="MetaCyc:ENSG00000116288-MONOMER"/>
<dbReference type="BRENDA" id="3.5.1.124">
    <property type="organism ID" value="2681"/>
</dbReference>
<dbReference type="BRENDA" id="4.2.1.130">
    <property type="organism ID" value="2681"/>
</dbReference>
<dbReference type="PathwayCommons" id="Q99497"/>
<dbReference type="Reactome" id="R-HSA-3899300">
    <property type="pathway name" value="SUMOylation of transcription cofactors"/>
</dbReference>
<dbReference type="Reactome" id="R-HSA-9613829">
    <property type="pathway name" value="Chaperone Mediated Autophagy"/>
</dbReference>
<dbReference type="Reactome" id="R-HSA-9615710">
    <property type="pathway name" value="Late endosomal microautophagy"/>
</dbReference>
<dbReference type="Reactome" id="R-HSA-9646399">
    <property type="pathway name" value="Aggrephagy"/>
</dbReference>
<dbReference type="SABIO-RK" id="Q99497"/>
<dbReference type="SignaLink" id="Q99497"/>
<dbReference type="SIGNOR" id="Q99497"/>
<dbReference type="BioGRID-ORCS" id="11315">
    <property type="hits" value="21 hits in 1167 CRISPR screens"/>
</dbReference>
<dbReference type="CD-CODE" id="232F8A39">
    <property type="entry name" value="P-body"/>
</dbReference>
<dbReference type="CD-CODE" id="DEE660B4">
    <property type="entry name" value="Stress granule"/>
</dbReference>
<dbReference type="CD-CODE" id="FB4E32DD">
    <property type="entry name" value="Presynaptic clusters and postsynaptic densities"/>
</dbReference>
<dbReference type="ChiTaRS" id="PARK7">
    <property type="organism name" value="human"/>
</dbReference>
<dbReference type="EvolutionaryTrace" id="Q99497"/>
<dbReference type="GeneWiki" id="PARK7"/>
<dbReference type="GenomeRNAi" id="11315"/>
<dbReference type="Pharos" id="Q99497">
    <property type="development level" value="Tbio"/>
</dbReference>
<dbReference type="PRO" id="PR:Q99497"/>
<dbReference type="Proteomes" id="UP000005640">
    <property type="component" value="Chromosome 1"/>
</dbReference>
<dbReference type="RNAct" id="Q99497">
    <property type="molecule type" value="protein"/>
</dbReference>
<dbReference type="Bgee" id="ENSG00000116288">
    <property type="expression patterns" value="Expressed in adult organism and 209 other cell types or tissues"/>
</dbReference>
<dbReference type="ExpressionAtlas" id="Q99497">
    <property type="expression patterns" value="baseline and differential"/>
</dbReference>
<dbReference type="GO" id="GO:0005912">
    <property type="term" value="C:adherens junction"/>
    <property type="evidence" value="ECO:0007005"/>
    <property type="project" value="BHF-UCL"/>
</dbReference>
<dbReference type="GO" id="GO:0030424">
    <property type="term" value="C:axon"/>
    <property type="evidence" value="ECO:0000250"/>
    <property type="project" value="ParkinsonsUK-UCL"/>
</dbReference>
<dbReference type="GO" id="GO:0044297">
    <property type="term" value="C:cell body"/>
    <property type="evidence" value="ECO:0007669"/>
    <property type="project" value="Ensembl"/>
</dbReference>
<dbReference type="GO" id="GO:0000785">
    <property type="term" value="C:chromatin"/>
    <property type="evidence" value="ECO:0000314"/>
    <property type="project" value="ParkinsonsUK-UCL"/>
</dbReference>
<dbReference type="GO" id="GO:0005737">
    <property type="term" value="C:cytoplasm"/>
    <property type="evidence" value="ECO:0000314"/>
    <property type="project" value="UniProtKB"/>
</dbReference>
<dbReference type="GO" id="GO:0005829">
    <property type="term" value="C:cytosol"/>
    <property type="evidence" value="ECO:0000314"/>
    <property type="project" value="UniProtKB"/>
</dbReference>
<dbReference type="GO" id="GO:0005783">
    <property type="term" value="C:endoplasmic reticulum"/>
    <property type="evidence" value="ECO:0000314"/>
    <property type="project" value="UniProtKB"/>
</dbReference>
<dbReference type="GO" id="GO:0070062">
    <property type="term" value="C:extracellular exosome"/>
    <property type="evidence" value="ECO:0007005"/>
    <property type="project" value="UniProtKB"/>
</dbReference>
<dbReference type="GO" id="GO:0045121">
    <property type="term" value="C:membrane raft"/>
    <property type="evidence" value="ECO:0007669"/>
    <property type="project" value="UniProtKB-SubCell"/>
</dbReference>
<dbReference type="GO" id="GO:0005758">
    <property type="term" value="C:mitochondrial intermembrane space"/>
    <property type="evidence" value="ECO:0007669"/>
    <property type="project" value="Ensembl"/>
</dbReference>
<dbReference type="GO" id="GO:0005759">
    <property type="term" value="C:mitochondrial matrix"/>
    <property type="evidence" value="ECO:0007669"/>
    <property type="project" value="Ensembl"/>
</dbReference>
<dbReference type="GO" id="GO:0005739">
    <property type="term" value="C:mitochondrion"/>
    <property type="evidence" value="ECO:0000314"/>
    <property type="project" value="UniProtKB"/>
</dbReference>
<dbReference type="GO" id="GO:0005654">
    <property type="term" value="C:nucleoplasm"/>
    <property type="evidence" value="ECO:0000314"/>
    <property type="project" value="HPA"/>
</dbReference>
<dbReference type="GO" id="GO:0005634">
    <property type="term" value="C:nucleus"/>
    <property type="evidence" value="ECO:0000314"/>
    <property type="project" value="UniProtKB"/>
</dbReference>
<dbReference type="GO" id="GO:0048471">
    <property type="term" value="C:perinuclear region of cytoplasm"/>
    <property type="evidence" value="ECO:0000314"/>
    <property type="project" value="BHF-UCL"/>
</dbReference>
<dbReference type="GO" id="GO:0005886">
    <property type="term" value="C:plasma membrane"/>
    <property type="evidence" value="ECO:0007669"/>
    <property type="project" value="UniProtKB-SubCell"/>
</dbReference>
<dbReference type="GO" id="GO:0016605">
    <property type="term" value="C:PML body"/>
    <property type="evidence" value="ECO:0000314"/>
    <property type="project" value="ParkinsonsUK-UCL"/>
</dbReference>
<dbReference type="GO" id="GO:0008021">
    <property type="term" value="C:synaptic vesicle"/>
    <property type="evidence" value="ECO:0007669"/>
    <property type="project" value="Ensembl"/>
</dbReference>
<dbReference type="GO" id="GO:0045296">
    <property type="term" value="F:cadherin binding"/>
    <property type="evidence" value="ECO:0007005"/>
    <property type="project" value="BHF-UCL"/>
</dbReference>
<dbReference type="GO" id="GO:0005507">
    <property type="term" value="F:copper ion binding"/>
    <property type="evidence" value="ECO:0000314"/>
    <property type="project" value="UniProtKB"/>
</dbReference>
<dbReference type="GO" id="GO:1903135">
    <property type="term" value="F:cupric ion binding"/>
    <property type="evidence" value="ECO:0000314"/>
    <property type="project" value="ParkinsonsUK-UCL"/>
</dbReference>
<dbReference type="GO" id="GO:1903136">
    <property type="term" value="F:cuprous ion binding"/>
    <property type="evidence" value="ECO:0000314"/>
    <property type="project" value="ParkinsonsUK-UCL"/>
</dbReference>
<dbReference type="GO" id="GO:0019955">
    <property type="term" value="F:cytokine binding"/>
    <property type="evidence" value="ECO:0000353"/>
    <property type="project" value="ParkinsonsUK-UCL"/>
</dbReference>
<dbReference type="GO" id="GO:0140297">
    <property type="term" value="F:DNA-binding transcription factor binding"/>
    <property type="evidence" value="ECO:0000353"/>
    <property type="project" value="ParkinsonsUK-UCL"/>
</dbReference>
<dbReference type="GO" id="GO:0008047">
    <property type="term" value="F:enzyme activator activity"/>
    <property type="evidence" value="ECO:0000314"/>
    <property type="project" value="ParkinsonsUK-UCL"/>
</dbReference>
<dbReference type="GO" id="GO:0019899">
    <property type="term" value="F:enzyme binding"/>
    <property type="evidence" value="ECO:0000353"/>
    <property type="project" value="ParkinsonsUK-UCL"/>
</dbReference>
<dbReference type="GO" id="GO:1990422">
    <property type="term" value="F:glyoxalase (glycolic acid-forming) activity"/>
    <property type="evidence" value="ECO:0000314"/>
    <property type="project" value="UniProtKB"/>
</dbReference>
<dbReference type="GO" id="GO:0042802">
    <property type="term" value="F:identical protein binding"/>
    <property type="evidence" value="ECO:0000353"/>
    <property type="project" value="IntAct"/>
</dbReference>
<dbReference type="GO" id="GO:0019900">
    <property type="term" value="F:kinase binding"/>
    <property type="evidence" value="ECO:0000353"/>
    <property type="project" value="UniProtKB"/>
</dbReference>
<dbReference type="GO" id="GO:0036478">
    <property type="term" value="F:L-dopa decarboxylase activator activity"/>
    <property type="evidence" value="ECO:0000314"/>
    <property type="project" value="ParkinsonsUK-UCL"/>
</dbReference>
<dbReference type="GO" id="GO:0045340">
    <property type="term" value="F:mercury ion binding"/>
    <property type="evidence" value="ECO:0000314"/>
    <property type="project" value="UniProtKB"/>
</dbReference>
<dbReference type="GO" id="GO:0003729">
    <property type="term" value="F:mRNA binding"/>
    <property type="evidence" value="ECO:0000314"/>
    <property type="project" value="UniProtKB"/>
</dbReference>
<dbReference type="GO" id="GO:0050681">
    <property type="term" value="F:nuclear androgen receptor binding"/>
    <property type="evidence" value="ECO:0000353"/>
    <property type="project" value="ParkinsonsUK-UCL"/>
</dbReference>
<dbReference type="GO" id="GO:0016684">
    <property type="term" value="F:oxidoreductase activity, acting on peroxide as acceptor"/>
    <property type="evidence" value="ECO:0000314"/>
    <property type="project" value="ParkinsonsUK-UCL"/>
</dbReference>
<dbReference type="GO" id="GO:0019826">
    <property type="term" value="F:oxygen sensor activity"/>
    <property type="evidence" value="ECO:0007669"/>
    <property type="project" value="Ensembl"/>
</dbReference>
<dbReference type="GO" id="GO:0008233">
    <property type="term" value="F:peptidase activity"/>
    <property type="evidence" value="ECO:0000314"/>
    <property type="project" value="UniProtKB"/>
</dbReference>
<dbReference type="GO" id="GO:0030414">
    <property type="term" value="F:peptidase inhibitor activity"/>
    <property type="evidence" value="ECO:0000314"/>
    <property type="project" value="ParkinsonsUK-UCL"/>
</dbReference>
<dbReference type="GO" id="GO:0051920">
    <property type="term" value="F:peroxiredoxin activity"/>
    <property type="evidence" value="ECO:0007669"/>
    <property type="project" value="Ensembl"/>
</dbReference>
<dbReference type="GO" id="GO:0036524">
    <property type="term" value="F:protein deglycase activity"/>
    <property type="evidence" value="ECO:0000314"/>
    <property type="project" value="UniProtKB"/>
</dbReference>
<dbReference type="GO" id="GO:0042803">
    <property type="term" value="F:protein homodimerization activity"/>
    <property type="evidence" value="ECO:0000314"/>
    <property type="project" value="UniProtKB"/>
</dbReference>
<dbReference type="GO" id="GO:0097110">
    <property type="term" value="F:scaffold protein binding"/>
    <property type="evidence" value="ECO:0000353"/>
    <property type="project" value="ParkinsonsUK-UCL"/>
</dbReference>
<dbReference type="GO" id="GO:0030546">
    <property type="term" value="F:signaling receptor activator activity"/>
    <property type="evidence" value="ECO:0000314"/>
    <property type="project" value="ParkinsonsUK-UCL"/>
</dbReference>
<dbReference type="GO" id="GO:0005102">
    <property type="term" value="F:signaling receptor binding"/>
    <property type="evidence" value="ECO:0000353"/>
    <property type="project" value="UniProtKB"/>
</dbReference>
<dbReference type="GO" id="GO:0044388">
    <property type="term" value="F:small protein activating enzyme binding"/>
    <property type="evidence" value="ECO:0000353"/>
    <property type="project" value="ParkinsonsUK-UCL"/>
</dbReference>
<dbReference type="GO" id="GO:0016532">
    <property type="term" value="F:superoxide dismutase copper chaperone activity"/>
    <property type="evidence" value="ECO:0000314"/>
    <property type="project" value="ParkinsonsUK-UCL"/>
</dbReference>
<dbReference type="GO" id="GO:0003713">
    <property type="term" value="F:transcription coactivator activity"/>
    <property type="evidence" value="ECO:0000316"/>
    <property type="project" value="ParkinsonsUK-UCL"/>
</dbReference>
<dbReference type="GO" id="GO:0036470">
    <property type="term" value="F:tyrosine 3-monooxygenase activator activity"/>
    <property type="evidence" value="ECO:0000314"/>
    <property type="project" value="ParkinsonsUK-UCL"/>
</dbReference>
<dbReference type="GO" id="GO:0044390">
    <property type="term" value="F:ubiquitin-like protein conjugating enzyme binding"/>
    <property type="evidence" value="ECO:0000353"/>
    <property type="project" value="ParkinsonsUK-UCL"/>
</dbReference>
<dbReference type="GO" id="GO:0055105">
    <property type="term" value="F:ubiquitin-protein transferase inhibitor activity"/>
    <property type="evidence" value="ECO:0000314"/>
    <property type="project" value="ParkinsonsUK-UCL"/>
</dbReference>
<dbReference type="GO" id="GO:1990381">
    <property type="term" value="F:ubiquitin-specific protease binding"/>
    <property type="evidence" value="ECO:0000353"/>
    <property type="project" value="ParkinsonsUK-UCL"/>
</dbReference>
<dbReference type="GO" id="GO:0008344">
    <property type="term" value="P:adult locomotory behavior"/>
    <property type="evidence" value="ECO:0007669"/>
    <property type="project" value="Ensembl"/>
</dbReference>
<dbReference type="GO" id="GO:0030521">
    <property type="term" value="P:androgen receptor signaling pathway"/>
    <property type="evidence" value="ECO:0000315"/>
    <property type="project" value="ParkinsonsUK-UCL"/>
</dbReference>
<dbReference type="GO" id="GO:0006914">
    <property type="term" value="P:autophagy"/>
    <property type="evidence" value="ECO:0007669"/>
    <property type="project" value="UniProtKB-KW"/>
</dbReference>
<dbReference type="GO" id="GO:0110095">
    <property type="term" value="P:cellular detoxification of aldehyde"/>
    <property type="evidence" value="ECO:0000314"/>
    <property type="project" value="UniProtKB"/>
</dbReference>
<dbReference type="GO" id="GO:0140041">
    <property type="term" value="P:cellular detoxification of methylglyoxal"/>
    <property type="evidence" value="ECO:0000314"/>
    <property type="project" value="UniProtKB"/>
</dbReference>
<dbReference type="GO" id="GO:0036471">
    <property type="term" value="P:cellular response to glyoxal"/>
    <property type="evidence" value="ECO:0000314"/>
    <property type="project" value="ParkinsonsUK-UCL"/>
</dbReference>
<dbReference type="GO" id="GO:0070301">
    <property type="term" value="P:cellular response to hydrogen peroxide"/>
    <property type="evidence" value="ECO:0000315"/>
    <property type="project" value="ParkinsonsUK-UCL"/>
</dbReference>
<dbReference type="GO" id="GO:0034599">
    <property type="term" value="P:cellular response to oxidative stress"/>
    <property type="evidence" value="ECO:0000314"/>
    <property type="project" value="ParkinsonsUK-UCL"/>
</dbReference>
<dbReference type="GO" id="GO:0070994">
    <property type="term" value="P:detection of oxidative stress"/>
    <property type="evidence" value="ECO:0007669"/>
    <property type="project" value="Ensembl"/>
</dbReference>
<dbReference type="GO" id="GO:0010273">
    <property type="term" value="P:detoxification of copper ion"/>
    <property type="evidence" value="ECO:0000315"/>
    <property type="project" value="UniProtKB"/>
</dbReference>
<dbReference type="GO" id="GO:0061691">
    <property type="term" value="P:detoxification of hydrogen peroxide"/>
    <property type="evidence" value="ECO:0000314"/>
    <property type="project" value="UniProtKB"/>
</dbReference>
<dbReference type="GO" id="GO:0050787">
    <property type="term" value="P:detoxification of mercury ion"/>
    <property type="evidence" value="ECO:0007669"/>
    <property type="project" value="Ensembl"/>
</dbReference>
<dbReference type="GO" id="GO:0006281">
    <property type="term" value="P:DNA repair"/>
    <property type="evidence" value="ECO:0000314"/>
    <property type="project" value="UniProtKB"/>
</dbReference>
<dbReference type="GO" id="GO:0051583">
    <property type="term" value="P:dopamine uptake involved in synaptic transmission"/>
    <property type="evidence" value="ECO:0007669"/>
    <property type="project" value="Ensembl"/>
</dbReference>
<dbReference type="GO" id="GO:0042593">
    <property type="term" value="P:glucose homeostasis"/>
    <property type="evidence" value="ECO:0000250"/>
    <property type="project" value="UniProtKB"/>
</dbReference>
<dbReference type="GO" id="GO:0046295">
    <property type="term" value="P:glycolate biosynthetic process"/>
    <property type="evidence" value="ECO:0000314"/>
    <property type="project" value="ParkinsonsUK-UCL"/>
</dbReference>
<dbReference type="GO" id="GO:1903189">
    <property type="term" value="P:glyoxal metabolic process"/>
    <property type="evidence" value="ECO:0000314"/>
    <property type="project" value="ParkinsonsUK-UCL"/>
</dbReference>
<dbReference type="GO" id="GO:0106044">
    <property type="term" value="P:guanine deglycation"/>
    <property type="evidence" value="ECO:0000314"/>
    <property type="project" value="UniProtKB"/>
</dbReference>
<dbReference type="GO" id="GO:0106046">
    <property type="term" value="P:guanine deglycation, glyoxal removal"/>
    <property type="evidence" value="ECO:0000314"/>
    <property type="project" value="UniProtKB"/>
</dbReference>
<dbReference type="GO" id="GO:0106045">
    <property type="term" value="P:guanine deglycation, methylglyoxal removal"/>
    <property type="evidence" value="ECO:0000314"/>
    <property type="project" value="UniProtKB"/>
</dbReference>
<dbReference type="GO" id="GO:0042743">
    <property type="term" value="P:hydrogen peroxide metabolic process"/>
    <property type="evidence" value="ECO:0000314"/>
    <property type="project" value="ParkinsonsUK-UCL"/>
</dbReference>
<dbReference type="GO" id="GO:0006954">
    <property type="term" value="P:inflammatory response"/>
    <property type="evidence" value="ECO:0007669"/>
    <property type="project" value="UniProtKB-KW"/>
</dbReference>
<dbReference type="GO" id="GO:0030073">
    <property type="term" value="P:insulin secretion"/>
    <property type="evidence" value="ECO:0000250"/>
    <property type="project" value="UniProtKB"/>
</dbReference>
<dbReference type="GO" id="GO:0019249">
    <property type="term" value="P:lactate biosynthetic process"/>
    <property type="evidence" value="ECO:0000314"/>
    <property type="project" value="ParkinsonsUK-UCL"/>
</dbReference>
<dbReference type="GO" id="GO:0051899">
    <property type="term" value="P:membrane depolarization"/>
    <property type="evidence" value="ECO:0007669"/>
    <property type="project" value="Ensembl"/>
</dbReference>
<dbReference type="GO" id="GO:0060081">
    <property type="term" value="P:membrane hyperpolarization"/>
    <property type="evidence" value="ECO:0007669"/>
    <property type="project" value="Ensembl"/>
</dbReference>
<dbReference type="GO" id="GO:0061727">
    <property type="term" value="P:methylglyoxal catabolic process to lactate"/>
    <property type="evidence" value="ECO:0000314"/>
    <property type="project" value="UniProtKB"/>
</dbReference>
<dbReference type="GO" id="GO:0009438">
    <property type="term" value="P:methylglyoxal metabolic process"/>
    <property type="evidence" value="ECO:0000314"/>
    <property type="project" value="ParkinsonsUK-UCL"/>
</dbReference>
<dbReference type="GO" id="GO:0007005">
    <property type="term" value="P:mitochondrion organization"/>
    <property type="evidence" value="ECO:0000250"/>
    <property type="project" value="UniProtKB"/>
</dbReference>
<dbReference type="GO" id="GO:1903073">
    <property type="term" value="P:negative regulation of death-inducing signaling complex assembly"/>
    <property type="evidence" value="ECO:0000315"/>
    <property type="project" value="ParkinsonsUK-UCL"/>
</dbReference>
<dbReference type="GO" id="GO:1902236">
    <property type="term" value="P:negative regulation of endoplasmic reticulum stress-induced intrinsic apoptotic signaling pathway"/>
    <property type="evidence" value="ECO:0000316"/>
    <property type="project" value="ParkinsonsUK-UCL"/>
</dbReference>
<dbReference type="GO" id="GO:2001237">
    <property type="term" value="P:negative regulation of extrinsic apoptotic signaling pathway"/>
    <property type="evidence" value="ECO:0000315"/>
    <property type="project" value="UniProtKB"/>
</dbReference>
<dbReference type="GO" id="GO:0010629">
    <property type="term" value="P:negative regulation of gene expression"/>
    <property type="evidence" value="ECO:0000314"/>
    <property type="project" value="ParkinsonsUK-UCL"/>
</dbReference>
<dbReference type="GO" id="GO:1903384">
    <property type="term" value="P:negative regulation of hydrogen peroxide-induced neuron intrinsic apoptotic signaling pathway"/>
    <property type="evidence" value="ECO:0000316"/>
    <property type="project" value="ParkinsonsUK-UCL"/>
</dbReference>
<dbReference type="GO" id="GO:1903751">
    <property type="term" value="P:negative regulation of intrinsic apoptotic signaling pathway in response to hydrogen peroxide"/>
    <property type="evidence" value="ECO:0000314"/>
    <property type="project" value="ParkinsonsUK-UCL"/>
</dbReference>
<dbReference type="GO" id="GO:0043524">
    <property type="term" value="P:negative regulation of neuron apoptotic process"/>
    <property type="evidence" value="ECO:0000314"/>
    <property type="project" value="BHF-UCL"/>
</dbReference>
<dbReference type="GO" id="GO:1905259">
    <property type="term" value="P:negative regulation of nitrosative stress-induced intrinsic apoptotic signaling pathway"/>
    <property type="evidence" value="ECO:0000314"/>
    <property type="project" value="ParkinsonsUK-UCL"/>
</dbReference>
<dbReference type="GO" id="GO:1902176">
    <property type="term" value="P:negative regulation of oxidative stress-induced intrinsic apoptotic signaling pathway"/>
    <property type="evidence" value="ECO:0000314"/>
    <property type="project" value="ParkinsonsUK-UCL"/>
</dbReference>
<dbReference type="GO" id="GO:1903377">
    <property type="term" value="P:negative regulation of oxidative stress-induced neuron intrinsic apoptotic signaling pathway"/>
    <property type="evidence" value="ECO:0000314"/>
    <property type="project" value="ParkinsonsUK-UCL"/>
</dbReference>
<dbReference type="GO" id="GO:0032435">
    <property type="term" value="P:negative regulation of proteasomal ubiquitin-dependent protein catabolic process"/>
    <property type="evidence" value="ECO:0000314"/>
    <property type="project" value="ParkinsonsUK-UCL"/>
</dbReference>
<dbReference type="GO" id="GO:0046826">
    <property type="term" value="P:negative regulation of protein export from nucleus"/>
    <property type="evidence" value="ECO:0000316"/>
    <property type="project" value="ParkinsonsUK-UCL"/>
</dbReference>
<dbReference type="GO" id="GO:1903094">
    <property type="term" value="P:negative regulation of protein K48-linked deubiquitination"/>
    <property type="evidence" value="ECO:0000314"/>
    <property type="project" value="ParkinsonsUK-UCL"/>
</dbReference>
<dbReference type="GO" id="GO:0033234">
    <property type="term" value="P:negative regulation of protein sumoylation"/>
    <property type="evidence" value="ECO:0000314"/>
    <property type="project" value="ParkinsonsUK-UCL"/>
</dbReference>
<dbReference type="GO" id="GO:0031397">
    <property type="term" value="P:negative regulation of protein ubiquitination"/>
    <property type="evidence" value="ECO:0000314"/>
    <property type="project" value="ParkinsonsUK-UCL"/>
</dbReference>
<dbReference type="GO" id="GO:1903427">
    <property type="term" value="P:negative regulation of reactive oxygen species biosynthetic process"/>
    <property type="evidence" value="ECO:0000250"/>
    <property type="project" value="UniProtKB"/>
</dbReference>
<dbReference type="GO" id="GO:1903122">
    <property type="term" value="P:negative regulation of TRAIL-activated apoptotic signaling pathway"/>
    <property type="evidence" value="ECO:0000315"/>
    <property type="project" value="ParkinsonsUK-UCL"/>
</dbReference>
<dbReference type="GO" id="GO:0002866">
    <property type="term" value="P:positive regulation of acute inflammatory response to antigenic stimulus"/>
    <property type="evidence" value="ECO:0000250"/>
    <property type="project" value="UniProtKB"/>
</dbReference>
<dbReference type="GO" id="GO:1903599">
    <property type="term" value="P:positive regulation of autophagy of mitochondrion"/>
    <property type="evidence" value="ECO:0000303"/>
    <property type="project" value="ParkinsonsUK-UCL"/>
</dbReference>
<dbReference type="GO" id="GO:1903181">
    <property type="term" value="P:positive regulation of dopamine biosynthetic process"/>
    <property type="evidence" value="ECO:0000314"/>
    <property type="project" value="ParkinsonsUK-UCL"/>
</dbReference>
<dbReference type="GO" id="GO:0010628">
    <property type="term" value="P:positive regulation of gene expression"/>
    <property type="evidence" value="ECO:0000304"/>
    <property type="project" value="ParkinsonsUK-UCL"/>
</dbReference>
<dbReference type="GO" id="GO:0032757">
    <property type="term" value="P:positive regulation of interleukin-8 production"/>
    <property type="evidence" value="ECO:0000314"/>
    <property type="project" value="ParkinsonsUK-UCL"/>
</dbReference>
<dbReference type="GO" id="GO:1903197">
    <property type="term" value="P:positive regulation of L-dopa biosynthetic process"/>
    <property type="evidence" value="ECO:0000315"/>
    <property type="project" value="ParkinsonsUK-UCL"/>
</dbReference>
<dbReference type="GO" id="GO:1902958">
    <property type="term" value="P:positive regulation of mitochondrial electron transport, NADH to ubiquinone"/>
    <property type="evidence" value="ECO:0000315"/>
    <property type="project" value="ParkinsonsUK-UCL"/>
</dbReference>
<dbReference type="GO" id="GO:1902177">
    <property type="term" value="P:positive regulation of oxidative stress-induced intrinsic apoptotic signaling pathway"/>
    <property type="evidence" value="ECO:0007669"/>
    <property type="project" value="Ensembl"/>
</dbReference>
<dbReference type="GO" id="GO:0051897">
    <property type="term" value="P:positive regulation of phosphatidylinositol 3-kinase/protein kinase B signal transduction"/>
    <property type="evidence" value="ECO:0000315"/>
    <property type="project" value="ParkinsonsUK-UCL"/>
</dbReference>
<dbReference type="GO" id="GO:1900182">
    <property type="term" value="P:positive regulation of protein localization to nucleus"/>
    <property type="evidence" value="ECO:0000314"/>
    <property type="project" value="ParkinsonsUK-UCL"/>
</dbReference>
<dbReference type="GO" id="GO:0031334">
    <property type="term" value="P:positive regulation of protein-containing complex assembly"/>
    <property type="evidence" value="ECO:0000314"/>
    <property type="project" value="ParkinsonsUK-UCL"/>
</dbReference>
<dbReference type="GO" id="GO:1903428">
    <property type="term" value="P:positive regulation of reactive oxygen species biosynthetic process"/>
    <property type="evidence" value="ECO:0007669"/>
    <property type="project" value="Ensembl"/>
</dbReference>
<dbReference type="GO" id="GO:2000379">
    <property type="term" value="P:positive regulation of reactive oxygen species metabolic process"/>
    <property type="evidence" value="ECO:0000314"/>
    <property type="project" value="ParkinsonsUK-UCL"/>
</dbReference>
<dbReference type="GO" id="GO:0045944">
    <property type="term" value="P:positive regulation of transcription by RNA polymerase II"/>
    <property type="evidence" value="ECO:0000314"/>
    <property type="project" value="ParkinsonsUK-UCL"/>
</dbReference>
<dbReference type="GO" id="GO:0030091">
    <property type="term" value="P:protein repair"/>
    <property type="evidence" value="ECO:0000314"/>
    <property type="project" value="ParkinsonsUK-UCL"/>
</dbReference>
<dbReference type="GO" id="GO:0050821">
    <property type="term" value="P:protein stabilization"/>
    <property type="evidence" value="ECO:0000314"/>
    <property type="project" value="ParkinsonsUK-UCL"/>
</dbReference>
<dbReference type="GO" id="GO:0006508">
    <property type="term" value="P:proteolysis"/>
    <property type="evidence" value="ECO:0007669"/>
    <property type="project" value="UniProtKB-KW"/>
</dbReference>
<dbReference type="GO" id="GO:0007265">
    <property type="term" value="P:Ras protein signal transduction"/>
    <property type="evidence" value="ECO:0000304"/>
    <property type="project" value="ParkinsonsUK-UCL"/>
</dbReference>
<dbReference type="GO" id="GO:0060765">
    <property type="term" value="P:regulation of androgen receptor signaling pathway"/>
    <property type="evidence" value="ECO:0000314"/>
    <property type="project" value="UniProtKB"/>
</dbReference>
<dbReference type="GO" id="GO:0050727">
    <property type="term" value="P:regulation of inflammatory response"/>
    <property type="evidence" value="ECO:0000250"/>
    <property type="project" value="UniProtKB"/>
</dbReference>
<dbReference type="GO" id="GO:0051881">
    <property type="term" value="P:regulation of mitochondrial membrane potential"/>
    <property type="evidence" value="ECO:0000315"/>
    <property type="project" value="ParkinsonsUK-UCL"/>
</dbReference>
<dbReference type="GO" id="GO:0043523">
    <property type="term" value="P:regulation of neuron apoptotic process"/>
    <property type="evidence" value="ECO:0000314"/>
    <property type="project" value="UniProtKB"/>
</dbReference>
<dbReference type="GO" id="GO:1903376">
    <property type="term" value="P:regulation of oxidative stress-induced neuron intrinsic apoptotic signaling pathway"/>
    <property type="evidence" value="ECO:0000314"/>
    <property type="project" value="ParkinsonsUK-UCL"/>
</dbReference>
<dbReference type="GO" id="GO:1902903">
    <property type="term" value="P:regulation of supramolecular fiber organization"/>
    <property type="evidence" value="ECO:0000304"/>
    <property type="project" value="ParkinsonsUK-UCL"/>
</dbReference>
<dbReference type="GO" id="GO:1900242">
    <property type="term" value="P:regulation of synaptic vesicle endocytosis"/>
    <property type="evidence" value="ECO:0007669"/>
    <property type="project" value="Ensembl"/>
</dbReference>
<dbReference type="GO" id="GO:0019430">
    <property type="term" value="P:removal of superoxide radicals"/>
    <property type="evidence" value="ECO:0000314"/>
    <property type="project" value="ParkinsonsUK-UCL"/>
</dbReference>
<dbReference type="GO" id="GO:0006979">
    <property type="term" value="P:response to oxidative stress"/>
    <property type="evidence" value="ECO:0000318"/>
    <property type="project" value="GO_Central"/>
</dbReference>
<dbReference type="GO" id="GO:0007338">
    <property type="term" value="P:single fertilization"/>
    <property type="evidence" value="ECO:0007669"/>
    <property type="project" value="UniProtKB-KW"/>
</dbReference>
<dbReference type="CDD" id="cd03135">
    <property type="entry name" value="GATase1_DJ-1"/>
    <property type="match status" value="1"/>
</dbReference>
<dbReference type="FunFam" id="3.40.50.880:FF:000057">
    <property type="entry name" value="Protein/nucleic acid deglycase DJ-1"/>
    <property type="match status" value="1"/>
</dbReference>
<dbReference type="Gene3D" id="3.40.50.880">
    <property type="match status" value="1"/>
</dbReference>
<dbReference type="InterPro" id="IPR029062">
    <property type="entry name" value="Class_I_gatase-like"/>
</dbReference>
<dbReference type="InterPro" id="IPR006287">
    <property type="entry name" value="DJ-1"/>
</dbReference>
<dbReference type="InterPro" id="IPR002818">
    <property type="entry name" value="DJ-1/PfpI"/>
</dbReference>
<dbReference type="InterPro" id="IPR050325">
    <property type="entry name" value="Prot/Nucl_acid_deglycase"/>
</dbReference>
<dbReference type="NCBIfam" id="TIGR01383">
    <property type="entry name" value="not_thiJ"/>
    <property type="match status" value="1"/>
</dbReference>
<dbReference type="PANTHER" id="PTHR48094:SF12">
    <property type="entry name" value="PARKINSON DISEASE PROTEIN 7 HOMOLOG"/>
    <property type="match status" value="1"/>
</dbReference>
<dbReference type="PANTHER" id="PTHR48094">
    <property type="entry name" value="PROTEIN/NUCLEIC ACID DEGLYCASE DJ-1-RELATED"/>
    <property type="match status" value="1"/>
</dbReference>
<dbReference type="Pfam" id="PF01965">
    <property type="entry name" value="DJ-1_PfpI"/>
    <property type="match status" value="1"/>
</dbReference>
<dbReference type="SUPFAM" id="SSF52317">
    <property type="entry name" value="Class I glutamine amidotransferase-like"/>
    <property type="match status" value="1"/>
</dbReference>
<proteinExistence type="evidence at protein level"/>